<gene>
    <name type="primary">CSNK1D</name>
    <name type="synonym">HCKID</name>
</gene>
<sequence length="415" mass="47330">MELRVGNRYRLGRKIGSGSFGDIYLGTDIAAGEEVAIKLECVKTKHPQLHIESKIYKMMQGGVGIPTIRWCGAEGDYNVMVMELLGPSLEDLFNFCSRKFSLKTVLLLADQMISRIEYIHSKNFIHRDVKPDNFLMGLGKKGNLVYIIDFGLAKKYRDARTHQHIPYRENKNLTGTARYASINTHLGIEQSRRDDLESLGYVLMYFNLGSLPWQGLKAATKRQKYERISEKKMSTPIEVLCKGYPSEFATYLNFCRSLRFDDKPDYSYLRQLFRNLFHRQGFSYDYVFDWNMLKFGASRAADDAERERRDREERLRHSRNPATRGLPSTASGRLRGTQEVAPPTPLTPTSHTANTSPRPVSGMERERKVSMRLHRGAPVNISSSDLTGRQDTSRMSTSQIPGRVASSGLQSVVHR</sequence>
<name>KC1D_HUMAN</name>
<feature type="chain" id="PRO_0000192833" description="Casein kinase I isoform delta">
    <location>
        <begin position="1"/>
        <end position="415"/>
    </location>
</feature>
<feature type="domain" description="Protein kinase" evidence="4">
    <location>
        <begin position="9"/>
        <end position="277"/>
    </location>
</feature>
<feature type="region of interest" description="Centrosomal localization signal (CLS)">
    <location>
        <begin position="278"/>
        <end position="364"/>
    </location>
</feature>
<feature type="region of interest" description="Disordered" evidence="6">
    <location>
        <begin position="301"/>
        <end position="415"/>
    </location>
</feature>
<feature type="region of interest" description="Autoinhibitory" evidence="1">
    <location>
        <begin position="317"/>
        <end position="342"/>
    </location>
</feature>
<feature type="compositionally biased region" description="Basic and acidic residues" evidence="6">
    <location>
        <begin position="301"/>
        <end position="315"/>
    </location>
</feature>
<feature type="compositionally biased region" description="Polar residues" evidence="6">
    <location>
        <begin position="347"/>
        <end position="358"/>
    </location>
</feature>
<feature type="compositionally biased region" description="Polar residues" evidence="6">
    <location>
        <begin position="380"/>
        <end position="400"/>
    </location>
</feature>
<feature type="active site" description="Proton acceptor" evidence="4 5">
    <location>
        <position position="128"/>
    </location>
</feature>
<feature type="binding site" evidence="4">
    <location>
        <begin position="15"/>
        <end position="23"/>
    </location>
    <ligand>
        <name>ATP</name>
        <dbReference type="ChEBI" id="CHEBI:30616"/>
    </ligand>
</feature>
<feature type="binding site" evidence="4">
    <location>
        <position position="38"/>
    </location>
    <ligand>
        <name>ATP</name>
        <dbReference type="ChEBI" id="CHEBI:30616"/>
    </ligand>
</feature>
<feature type="modified residue" description="Phosphoserine" evidence="49">
    <location>
        <position position="328"/>
    </location>
</feature>
<feature type="modified residue" description="Phosphoserine" evidence="46 49">
    <location>
        <position position="331"/>
    </location>
</feature>
<feature type="modified residue" description="Phosphoserine" evidence="2">
    <location>
        <position position="370"/>
    </location>
</feature>
<feature type="modified residue" description="Omega-N-methylarginine" evidence="3">
    <location>
        <position position="375"/>
    </location>
</feature>
<feature type="modified residue" description="Phosphoserine" evidence="49">
    <location>
        <position position="382"/>
    </location>
</feature>
<feature type="modified residue" description="Phosphoserine" evidence="48">
    <location>
        <position position="383"/>
    </location>
</feature>
<feature type="modified residue" description="Phosphoserine" evidence="46 49">
    <location>
        <position position="384"/>
    </location>
</feature>
<feature type="modified residue" description="Phosphoserine" evidence="49">
    <location>
        <position position="407"/>
    </location>
</feature>
<feature type="modified residue" description="Phosphoserine" evidence="47">
    <location>
        <position position="411"/>
    </location>
</feature>
<feature type="splice variant" id="VSP_010253" description="In isoform 2." evidence="40 41">
    <original>IPGRVASSGLQSVVHR</original>
    <variation>NSIPFEHHGK</variation>
    <location>
        <begin position="400"/>
        <end position="415"/>
    </location>
</feature>
<feature type="sequence variant" id="VAR_029075" description="In FASPS2; strongly reduces kinase activity; dbSNP:rs104894561." evidence="16 36">
    <original>T</original>
    <variation>A</variation>
    <location>
        <position position="44"/>
    </location>
</feature>
<feature type="sequence variant" id="VAR_069801" description="In FASPS2; strongly reduces kinase activity; dbSNP:rs397514693." evidence="36">
    <original>H</original>
    <variation>R</variation>
    <location>
        <position position="46"/>
    </location>
</feature>
<feature type="sequence variant" id="VAR_036451" description="In breast cancer samples; infiltrating ductal carcinoma; somatic mutation." evidence="19 20">
    <original>S</original>
    <variation>C</variation>
    <location>
        <position position="97"/>
    </location>
</feature>
<feature type="sequence variant" id="VAR_042081" description="In dbSNP:rs56124628." evidence="20">
    <original>P</original>
    <variation>A</variation>
    <location>
        <position position="401"/>
    </location>
</feature>
<feature type="mutagenesis site" description="Impaired kinase activity and abnormal subcellular localization with exclusive accumulation to the nucleus." evidence="9">
    <original>K</original>
    <variation>M</variation>
    <location>
        <position position="38"/>
    </location>
</feature>
<feature type="mutagenesis site" description="Impaired kinase activity and abnormal subcellular localization with exclusive accumulation to the nucleus." evidence="9">
    <original>T</original>
    <variation>I</variation>
    <location>
        <position position="176"/>
    </location>
</feature>
<feature type="sequence conflict" description="In Ref. 1; AAC50807." evidence="42" ref="1">
    <original>A</original>
    <variation>D</variation>
    <location>
        <position position="330"/>
    </location>
</feature>
<feature type="strand" evidence="51">
    <location>
        <begin position="3"/>
        <end position="5"/>
    </location>
</feature>
<feature type="turn" evidence="51">
    <location>
        <begin position="6"/>
        <end position="8"/>
    </location>
</feature>
<feature type="strand" evidence="51">
    <location>
        <begin position="9"/>
        <end position="18"/>
    </location>
</feature>
<feature type="strand" evidence="51">
    <location>
        <begin position="21"/>
        <end position="28"/>
    </location>
</feature>
<feature type="turn" evidence="51">
    <location>
        <begin position="29"/>
        <end position="32"/>
    </location>
</feature>
<feature type="strand" evidence="51">
    <location>
        <begin position="33"/>
        <end position="41"/>
    </location>
</feature>
<feature type="strand" evidence="51">
    <location>
        <begin position="44"/>
        <end position="46"/>
    </location>
</feature>
<feature type="helix" evidence="51">
    <location>
        <begin position="49"/>
        <end position="59"/>
    </location>
</feature>
<feature type="strand" evidence="51">
    <location>
        <begin position="68"/>
        <end position="74"/>
    </location>
</feature>
<feature type="strand" evidence="51">
    <location>
        <begin position="77"/>
        <end position="83"/>
    </location>
</feature>
<feature type="helix" evidence="51">
    <location>
        <begin position="89"/>
        <end position="95"/>
    </location>
</feature>
<feature type="turn" evidence="51">
    <location>
        <begin position="96"/>
        <end position="98"/>
    </location>
</feature>
<feature type="helix" evidence="51">
    <location>
        <begin position="102"/>
        <end position="121"/>
    </location>
</feature>
<feature type="helix" evidence="51">
    <location>
        <begin position="131"/>
        <end position="133"/>
    </location>
</feature>
<feature type="strand" evidence="51">
    <location>
        <begin position="134"/>
        <end position="136"/>
    </location>
</feature>
<feature type="helix" evidence="51">
    <location>
        <begin position="139"/>
        <end position="141"/>
    </location>
</feature>
<feature type="strand" evidence="51">
    <location>
        <begin position="145"/>
        <end position="147"/>
    </location>
</feature>
<feature type="strand" evidence="53">
    <location>
        <begin position="154"/>
        <end position="157"/>
    </location>
</feature>
<feature type="turn" evidence="51">
    <location>
        <begin position="159"/>
        <end position="161"/>
    </location>
</feature>
<feature type="helix" evidence="51">
    <location>
        <begin position="177"/>
        <end position="179"/>
    </location>
</feature>
<feature type="helix" evidence="51">
    <location>
        <begin position="182"/>
        <end position="185"/>
    </location>
</feature>
<feature type="helix" evidence="51">
    <location>
        <begin position="192"/>
        <end position="208"/>
    </location>
</feature>
<feature type="turn" evidence="52">
    <location>
        <begin position="212"/>
        <end position="215"/>
    </location>
</feature>
<feature type="strand" evidence="51">
    <location>
        <begin position="217"/>
        <end position="219"/>
    </location>
</feature>
<feature type="helix" evidence="51">
    <location>
        <begin position="221"/>
        <end position="233"/>
    </location>
</feature>
<feature type="helix" evidence="51">
    <location>
        <begin position="237"/>
        <end position="240"/>
    </location>
</feature>
<feature type="turn" evidence="51">
    <location>
        <begin position="241"/>
        <end position="243"/>
    </location>
</feature>
<feature type="helix" evidence="51">
    <location>
        <begin position="247"/>
        <end position="257"/>
    </location>
</feature>
<feature type="helix" evidence="51">
    <location>
        <begin position="266"/>
        <end position="279"/>
    </location>
</feature>
<feature type="helix" evidence="50">
    <location>
        <begin position="280"/>
        <end position="283"/>
    </location>
</feature>
<feature type="helix" evidence="51">
    <location>
        <begin position="289"/>
        <end position="292"/>
    </location>
</feature>
<keyword id="KW-0002">3D-structure</keyword>
<keyword id="KW-0025">Alternative splicing</keyword>
<keyword id="KW-0067">ATP-binding</keyword>
<keyword id="KW-0090">Biological rhythms</keyword>
<keyword id="KW-1003">Cell membrane</keyword>
<keyword id="KW-0963">Cytoplasm</keyword>
<keyword id="KW-0206">Cytoskeleton</keyword>
<keyword id="KW-0225">Disease variant</keyword>
<keyword id="KW-0333">Golgi apparatus</keyword>
<keyword id="KW-0418">Kinase</keyword>
<keyword id="KW-0472">Membrane</keyword>
<keyword id="KW-0488">Methylation</keyword>
<keyword id="KW-0547">Nucleotide-binding</keyword>
<keyword id="KW-0539">Nucleus</keyword>
<keyword id="KW-0597">Phosphoprotein</keyword>
<keyword id="KW-1267">Proteomics identification</keyword>
<keyword id="KW-1185">Reference proteome</keyword>
<keyword id="KW-0723">Serine/threonine-protein kinase</keyword>
<keyword id="KW-0808">Transferase</keyword>
<keyword id="KW-0879">Wnt signaling pathway</keyword>
<organism>
    <name type="scientific">Homo sapiens</name>
    <name type="common">Human</name>
    <dbReference type="NCBI Taxonomy" id="9606"/>
    <lineage>
        <taxon>Eukaryota</taxon>
        <taxon>Metazoa</taxon>
        <taxon>Chordata</taxon>
        <taxon>Craniata</taxon>
        <taxon>Vertebrata</taxon>
        <taxon>Euteleostomi</taxon>
        <taxon>Mammalia</taxon>
        <taxon>Eutheria</taxon>
        <taxon>Euarchontoglires</taxon>
        <taxon>Primates</taxon>
        <taxon>Haplorrhini</taxon>
        <taxon>Catarrhini</taxon>
        <taxon>Hominidae</taxon>
        <taxon>Homo</taxon>
    </lineage>
</organism>
<protein>
    <recommendedName>
        <fullName>Casein kinase I isoform delta</fullName>
        <shortName>CKI-delta</shortName>
        <shortName>CKId</shortName>
        <ecNumber evidence="14 21 25 28 33 36">2.7.11.1</ecNumber>
    </recommendedName>
    <alternativeName>
        <fullName>Tau-protein kinase CSNK1D</fullName>
        <ecNumber evidence="14 18 21">2.7.11.26</ecNumber>
    </alternativeName>
</protein>
<proteinExistence type="evidence at protein level"/>
<accession>P48730</accession>
<accession>A2I2P2</accession>
<accession>Q96KZ6</accession>
<accession>Q9BTN5</accession>
<dbReference type="EC" id="2.7.11.1" evidence="14 21 25 28 33 36"/>
<dbReference type="EC" id="2.7.11.26" evidence="14 18 21"/>
<dbReference type="EMBL" id="U29171">
    <property type="protein sequence ID" value="AAC50807.1"/>
    <property type="molecule type" value="mRNA"/>
</dbReference>
<dbReference type="EMBL" id="U31285">
    <property type="protein sequence ID" value="AAC50808.1"/>
    <property type="molecule type" value="mRNA"/>
</dbReference>
<dbReference type="EMBL" id="AB091044">
    <property type="protein sequence ID" value="BAC10903.1"/>
    <property type="molecule type" value="mRNA"/>
</dbReference>
<dbReference type="EMBL" id="AK291758">
    <property type="protein sequence ID" value="BAF84447.1"/>
    <property type="molecule type" value="mRNA"/>
</dbReference>
<dbReference type="EMBL" id="EF015900">
    <property type="protein sequence ID" value="ABM64211.1"/>
    <property type="molecule type" value="Genomic_DNA"/>
</dbReference>
<dbReference type="EMBL" id="BC003558">
    <property type="protein sequence ID" value="AAH03558.1"/>
    <property type="molecule type" value="mRNA"/>
</dbReference>
<dbReference type="EMBL" id="BC015775">
    <property type="protein sequence ID" value="AAH15775.1"/>
    <property type="molecule type" value="mRNA"/>
</dbReference>
<dbReference type="CCDS" id="CCDS11805.1">
    <molecule id="P48730-1"/>
</dbReference>
<dbReference type="CCDS" id="CCDS11806.1">
    <molecule id="P48730-2"/>
</dbReference>
<dbReference type="PIR" id="G01876">
    <property type="entry name" value="G01876"/>
</dbReference>
<dbReference type="RefSeq" id="NP_001884.2">
    <molecule id="P48730-1"/>
    <property type="nucleotide sequence ID" value="NM_001893.4"/>
</dbReference>
<dbReference type="RefSeq" id="NP_620693.1">
    <molecule id="P48730-2"/>
    <property type="nucleotide sequence ID" value="NM_139062.4"/>
</dbReference>
<dbReference type="PDB" id="3UYS">
    <property type="method" value="X-ray"/>
    <property type="resolution" value="2.30 A"/>
    <property type="chains" value="A/B/C/D=1-294"/>
</dbReference>
<dbReference type="PDB" id="3UYT">
    <property type="method" value="X-ray"/>
    <property type="resolution" value="2.00 A"/>
    <property type="chains" value="A/B/C/D=1-294"/>
</dbReference>
<dbReference type="PDB" id="3UZP">
    <property type="method" value="X-ray"/>
    <property type="resolution" value="1.94 A"/>
    <property type="chains" value="A/B=1-294"/>
</dbReference>
<dbReference type="PDB" id="4HGT">
    <property type="method" value="X-ray"/>
    <property type="resolution" value="1.80 A"/>
    <property type="chains" value="A/B=1-294"/>
</dbReference>
<dbReference type="PDB" id="4HNF">
    <property type="method" value="X-ray"/>
    <property type="resolution" value="2.07 A"/>
    <property type="chains" value="A/B=1-294"/>
</dbReference>
<dbReference type="PDB" id="4KB8">
    <property type="method" value="X-ray"/>
    <property type="resolution" value="1.95 A"/>
    <property type="chains" value="A/B/C/D=3-317"/>
</dbReference>
<dbReference type="PDB" id="4KBA">
    <property type="method" value="X-ray"/>
    <property type="resolution" value="1.98 A"/>
    <property type="chains" value="A/B/C/D=3-317"/>
</dbReference>
<dbReference type="PDB" id="4KBC">
    <property type="method" value="X-ray"/>
    <property type="resolution" value="1.98 A"/>
    <property type="chains" value="A/B=1-317"/>
</dbReference>
<dbReference type="PDB" id="4KBK">
    <property type="method" value="X-ray"/>
    <property type="resolution" value="2.10 A"/>
    <property type="chains" value="A/B/C/D=3-317"/>
</dbReference>
<dbReference type="PDB" id="4TN6">
    <property type="method" value="X-ray"/>
    <property type="resolution" value="2.41 A"/>
    <property type="chains" value="A/B=1-301"/>
</dbReference>
<dbReference type="PDB" id="4TW9">
    <property type="method" value="X-ray"/>
    <property type="resolution" value="2.40 A"/>
    <property type="chains" value="A/B=1-295"/>
</dbReference>
<dbReference type="PDB" id="4TWC">
    <property type="method" value="X-ray"/>
    <property type="resolution" value="1.70 A"/>
    <property type="chains" value="A/B=1-295"/>
</dbReference>
<dbReference type="PDB" id="5IH4">
    <property type="method" value="X-ray"/>
    <property type="resolution" value="1.90 A"/>
    <property type="chains" value="A=1-294"/>
</dbReference>
<dbReference type="PDB" id="5IH5">
    <property type="method" value="X-ray"/>
    <property type="resolution" value="2.25 A"/>
    <property type="chains" value="A=1-294"/>
</dbReference>
<dbReference type="PDB" id="5IH6">
    <property type="method" value="X-ray"/>
    <property type="resolution" value="2.30 A"/>
    <property type="chains" value="A=1-294"/>
</dbReference>
<dbReference type="PDB" id="5MQV">
    <property type="method" value="X-ray"/>
    <property type="resolution" value="2.15 A"/>
    <property type="chains" value="A/B/C/D/E/F=1-294"/>
</dbReference>
<dbReference type="PDB" id="5OKT">
    <property type="method" value="X-ray"/>
    <property type="resolution" value="2.13 A"/>
    <property type="chains" value="A/B/C/D=1-294"/>
</dbReference>
<dbReference type="PDB" id="5W4W">
    <property type="method" value="X-ray"/>
    <property type="resolution" value="1.99 A"/>
    <property type="chains" value="A/B/C/D=3-317"/>
</dbReference>
<dbReference type="PDB" id="6F1W">
    <property type="method" value="X-ray"/>
    <property type="resolution" value="1.86 A"/>
    <property type="chains" value="A/B=1-294"/>
</dbReference>
<dbReference type="PDB" id="6F26">
    <property type="method" value="X-ray"/>
    <property type="resolution" value="1.83 A"/>
    <property type="chains" value="A/B=1-294"/>
</dbReference>
<dbReference type="PDB" id="6GZM">
    <property type="method" value="X-ray"/>
    <property type="resolution" value="1.59 A"/>
    <property type="chains" value="A/B=1-295"/>
</dbReference>
<dbReference type="PDB" id="6HMP">
    <property type="method" value="X-ray"/>
    <property type="resolution" value="2.04 A"/>
    <property type="chains" value="A/B=1-294"/>
</dbReference>
<dbReference type="PDB" id="6HMR">
    <property type="method" value="X-ray"/>
    <property type="resolution" value="1.78 A"/>
    <property type="chains" value="A/B=1-294"/>
</dbReference>
<dbReference type="PDB" id="6PXN">
    <property type="method" value="X-ray"/>
    <property type="resolution" value="1.55 A"/>
    <property type="chains" value="A/B=1-415"/>
</dbReference>
<dbReference type="PDB" id="6PXO">
    <property type="method" value="X-ray"/>
    <property type="resolution" value="2.00 A"/>
    <property type="chains" value="A/B=1-294"/>
</dbReference>
<dbReference type="PDB" id="6PXP">
    <property type="method" value="X-ray"/>
    <property type="resolution" value="2.35 A"/>
    <property type="chains" value="A/B=1-294"/>
</dbReference>
<dbReference type="PDB" id="6RCG">
    <property type="method" value="X-ray"/>
    <property type="resolution" value="1.40 A"/>
    <property type="chains" value="A=1-294"/>
</dbReference>
<dbReference type="PDB" id="6RCH">
    <property type="method" value="X-ray"/>
    <property type="resolution" value="1.45 A"/>
    <property type="chains" value="A/B=1-294"/>
</dbReference>
<dbReference type="PDB" id="6RU6">
    <property type="method" value="X-ray"/>
    <property type="resolution" value="2.05 A"/>
    <property type="chains" value="A/B=1-294"/>
</dbReference>
<dbReference type="PDB" id="6RU7">
    <property type="method" value="X-ray"/>
    <property type="resolution" value="2.08 A"/>
    <property type="chains" value="A/B=1-294"/>
</dbReference>
<dbReference type="PDB" id="6RU8">
    <property type="method" value="X-ray"/>
    <property type="resolution" value="1.92 A"/>
    <property type="chains" value="A/B/C/D=1-294"/>
</dbReference>
<dbReference type="PDB" id="7NZY">
    <property type="method" value="X-ray"/>
    <property type="resolution" value="1.85 A"/>
    <property type="chains" value="A/B/C/D=1-294"/>
</dbReference>
<dbReference type="PDB" id="7P7F">
    <property type="method" value="X-ray"/>
    <property type="resolution" value="1.96 A"/>
    <property type="chains" value="A/B/C/D=1-294"/>
</dbReference>
<dbReference type="PDB" id="7P7G">
    <property type="method" value="X-ray"/>
    <property type="resolution" value="1.70 A"/>
    <property type="chains" value="A/B=1-294"/>
</dbReference>
<dbReference type="PDB" id="7P7H">
    <property type="method" value="X-ray"/>
    <property type="resolution" value="2.40 A"/>
    <property type="chains" value="A/B=1-294"/>
</dbReference>
<dbReference type="PDB" id="7QR9">
    <property type="method" value="X-ray"/>
    <property type="resolution" value="2.30 A"/>
    <property type="chains" value="A/B/C/D=1-294"/>
</dbReference>
<dbReference type="PDB" id="7QRA">
    <property type="method" value="X-ray"/>
    <property type="resolution" value="2.40 A"/>
    <property type="chains" value="A/B/C/D=1-294"/>
</dbReference>
<dbReference type="PDB" id="7QRB">
    <property type="method" value="X-ray"/>
    <property type="resolution" value="2.60 A"/>
    <property type="chains" value="A/B/C/D=1-294"/>
</dbReference>
<dbReference type="PDB" id="8D7M">
    <property type="method" value="X-ray"/>
    <property type="resolution" value="2.25 A"/>
    <property type="chains" value="A/B=1-294"/>
</dbReference>
<dbReference type="PDB" id="8D7N">
    <property type="method" value="X-ray"/>
    <property type="resolution" value="1.66 A"/>
    <property type="chains" value="A/B=1-294"/>
</dbReference>
<dbReference type="PDB" id="8D7O">
    <property type="method" value="X-ray"/>
    <property type="resolution" value="1.65 A"/>
    <property type="chains" value="A/B=1-294"/>
</dbReference>
<dbReference type="PDB" id="8D7P">
    <property type="method" value="X-ray"/>
    <property type="resolution" value="2.25 A"/>
    <property type="chains" value="A/B=1-294"/>
</dbReference>
<dbReference type="PDB" id="8IZC">
    <property type="method" value="X-ray"/>
    <property type="resolution" value="1.45 A"/>
    <property type="chains" value="A/B=5-294"/>
</dbReference>
<dbReference type="PDB" id="8VXD">
    <property type="method" value="X-ray"/>
    <property type="resolution" value="2.47 A"/>
    <property type="chains" value="A/B=1-299"/>
</dbReference>
<dbReference type="PDB" id="8VXF">
    <property type="method" value="X-ray"/>
    <property type="resolution" value="2.28 A"/>
    <property type="chains" value="A/B=1-299"/>
</dbReference>
<dbReference type="PDB" id="9B3S">
    <property type="method" value="X-ray"/>
    <property type="resolution" value="2.40 A"/>
    <property type="chains" value="A/B=1-415"/>
</dbReference>
<dbReference type="PDBsum" id="3UYS"/>
<dbReference type="PDBsum" id="3UYT"/>
<dbReference type="PDBsum" id="3UZP"/>
<dbReference type="PDBsum" id="4HGT"/>
<dbReference type="PDBsum" id="4HNF"/>
<dbReference type="PDBsum" id="4KB8"/>
<dbReference type="PDBsum" id="4KBA"/>
<dbReference type="PDBsum" id="4KBC"/>
<dbReference type="PDBsum" id="4KBK"/>
<dbReference type="PDBsum" id="4TN6"/>
<dbReference type="PDBsum" id="4TW9"/>
<dbReference type="PDBsum" id="4TWC"/>
<dbReference type="PDBsum" id="5IH4"/>
<dbReference type="PDBsum" id="5IH5"/>
<dbReference type="PDBsum" id="5IH6"/>
<dbReference type="PDBsum" id="5MQV"/>
<dbReference type="PDBsum" id="5OKT"/>
<dbReference type="PDBsum" id="5W4W"/>
<dbReference type="PDBsum" id="6F1W"/>
<dbReference type="PDBsum" id="6F26"/>
<dbReference type="PDBsum" id="6GZM"/>
<dbReference type="PDBsum" id="6HMP"/>
<dbReference type="PDBsum" id="6HMR"/>
<dbReference type="PDBsum" id="6PXN"/>
<dbReference type="PDBsum" id="6PXO"/>
<dbReference type="PDBsum" id="6PXP"/>
<dbReference type="PDBsum" id="6RCG"/>
<dbReference type="PDBsum" id="6RCH"/>
<dbReference type="PDBsum" id="6RU6"/>
<dbReference type="PDBsum" id="6RU7"/>
<dbReference type="PDBsum" id="6RU8"/>
<dbReference type="PDBsum" id="7NZY"/>
<dbReference type="PDBsum" id="7P7F"/>
<dbReference type="PDBsum" id="7P7G"/>
<dbReference type="PDBsum" id="7P7H"/>
<dbReference type="PDBsum" id="7QR9"/>
<dbReference type="PDBsum" id="7QRA"/>
<dbReference type="PDBsum" id="7QRB"/>
<dbReference type="PDBsum" id="8D7M"/>
<dbReference type="PDBsum" id="8D7N"/>
<dbReference type="PDBsum" id="8D7O"/>
<dbReference type="PDBsum" id="8D7P"/>
<dbReference type="PDBsum" id="8IZC"/>
<dbReference type="PDBsum" id="8VXD"/>
<dbReference type="PDBsum" id="8VXF"/>
<dbReference type="PDBsum" id="9B3S"/>
<dbReference type="SMR" id="P48730"/>
<dbReference type="BioGRID" id="107837">
    <property type="interactions" value="265"/>
</dbReference>
<dbReference type="DIP" id="DIP-39735N"/>
<dbReference type="FunCoup" id="P48730">
    <property type="interactions" value="4598"/>
</dbReference>
<dbReference type="IntAct" id="P48730">
    <property type="interactions" value="188"/>
</dbReference>
<dbReference type="MINT" id="P48730"/>
<dbReference type="STRING" id="9606.ENSP00000381531"/>
<dbReference type="BindingDB" id="P48730"/>
<dbReference type="ChEMBL" id="CHEMBL2828"/>
<dbReference type="DrugCentral" id="P48730"/>
<dbReference type="GuidetoPHARMACOLOGY" id="1997"/>
<dbReference type="GlyGen" id="P48730">
    <property type="glycosylation" value="1 site, 1 O-linked glycan (1 site)"/>
</dbReference>
<dbReference type="iPTMnet" id="P48730"/>
<dbReference type="PhosphoSitePlus" id="P48730"/>
<dbReference type="BioMuta" id="CSNK1D"/>
<dbReference type="DMDM" id="27923980"/>
<dbReference type="CPTAC" id="CPTAC-3148"/>
<dbReference type="CPTAC" id="CPTAC-3149"/>
<dbReference type="jPOST" id="P48730"/>
<dbReference type="MassIVE" id="P48730"/>
<dbReference type="PaxDb" id="9606-ENSP00000324464"/>
<dbReference type="PeptideAtlas" id="P48730"/>
<dbReference type="ProteomicsDB" id="55930">
    <molecule id="P48730-1"/>
</dbReference>
<dbReference type="ProteomicsDB" id="55931">
    <molecule id="P48730-2"/>
</dbReference>
<dbReference type="Pumba" id="P48730"/>
<dbReference type="TopDownProteomics" id="P48730-1">
    <molecule id="P48730-1"/>
</dbReference>
<dbReference type="Antibodypedia" id="4210">
    <property type="antibodies" value="366 antibodies from 40 providers"/>
</dbReference>
<dbReference type="DNASU" id="1453"/>
<dbReference type="Ensembl" id="ENST00000314028.11">
    <molecule id="P48730-1"/>
    <property type="protein sequence ID" value="ENSP00000324464.6"/>
    <property type="gene ID" value="ENSG00000141551.15"/>
</dbReference>
<dbReference type="Ensembl" id="ENST00000392334.7">
    <molecule id="P48730-2"/>
    <property type="protein sequence ID" value="ENSP00000376146.2"/>
    <property type="gene ID" value="ENSG00000141551.15"/>
</dbReference>
<dbReference type="GeneID" id="1453"/>
<dbReference type="KEGG" id="hsa:1453"/>
<dbReference type="MANE-Select" id="ENST00000314028.11">
    <property type="protein sequence ID" value="ENSP00000324464.6"/>
    <property type="RefSeq nucleotide sequence ID" value="NM_001893.6"/>
    <property type="RefSeq protein sequence ID" value="NP_001884.2"/>
</dbReference>
<dbReference type="UCSC" id="uc002kei.4">
    <molecule id="P48730-1"/>
    <property type="organism name" value="human"/>
</dbReference>
<dbReference type="AGR" id="HGNC:2452"/>
<dbReference type="CTD" id="1453"/>
<dbReference type="DisGeNET" id="1453"/>
<dbReference type="GeneCards" id="CSNK1D"/>
<dbReference type="HGNC" id="HGNC:2452">
    <property type="gene designation" value="CSNK1D"/>
</dbReference>
<dbReference type="HPA" id="ENSG00000141551">
    <property type="expression patterns" value="Low tissue specificity"/>
</dbReference>
<dbReference type="MalaCards" id="CSNK1D"/>
<dbReference type="MIM" id="600864">
    <property type="type" value="gene"/>
</dbReference>
<dbReference type="MIM" id="615224">
    <property type="type" value="phenotype"/>
</dbReference>
<dbReference type="neXtProt" id="NX_P48730"/>
<dbReference type="OpenTargets" id="ENSG00000141551"/>
<dbReference type="Orphanet" id="164736">
    <property type="disease" value="Familial advanced sleep-phase syndrome"/>
</dbReference>
<dbReference type="PharmGKB" id="PA26952"/>
<dbReference type="VEuPathDB" id="HostDB:ENSG00000141551"/>
<dbReference type="eggNOG" id="KOG1164">
    <property type="taxonomic scope" value="Eukaryota"/>
</dbReference>
<dbReference type="GeneTree" id="ENSGT00940000153536"/>
<dbReference type="HOGENOM" id="CLU_019279_2_2_1"/>
<dbReference type="InParanoid" id="P48730"/>
<dbReference type="OMA" id="IFDWTFL"/>
<dbReference type="OrthoDB" id="5800476at2759"/>
<dbReference type="PAN-GO" id="P48730">
    <property type="GO annotations" value="11 GO annotations based on evolutionary models"/>
</dbReference>
<dbReference type="PhylomeDB" id="P48730"/>
<dbReference type="TreeFam" id="TF300544"/>
<dbReference type="BRENDA" id="2.7.11.1">
    <property type="organism ID" value="2681"/>
</dbReference>
<dbReference type="BRENDA" id="2.7.11.26">
    <property type="organism ID" value="2681"/>
</dbReference>
<dbReference type="PathwayCommons" id="P48730"/>
<dbReference type="Reactome" id="R-HSA-204005">
    <property type="pathway name" value="COPII-mediated vesicle transport"/>
</dbReference>
<dbReference type="Reactome" id="R-HSA-2565942">
    <property type="pathway name" value="Regulation of PLK1 Activity at G2/M Transition"/>
</dbReference>
<dbReference type="Reactome" id="R-HSA-380259">
    <property type="pathway name" value="Loss of Nlp from mitotic centrosomes"/>
</dbReference>
<dbReference type="Reactome" id="R-HSA-380270">
    <property type="pathway name" value="Recruitment of mitotic centrosome proteins and complexes"/>
</dbReference>
<dbReference type="Reactome" id="R-HSA-380284">
    <property type="pathway name" value="Loss of proteins required for interphase microtubule organization from the centrosome"/>
</dbReference>
<dbReference type="Reactome" id="R-HSA-380320">
    <property type="pathway name" value="Recruitment of NuMA to mitotic centrosomes"/>
</dbReference>
<dbReference type="Reactome" id="R-HSA-400253">
    <property type="pathway name" value="Circadian Clock"/>
</dbReference>
<dbReference type="Reactome" id="R-HSA-5620912">
    <property type="pathway name" value="Anchoring of the basal body to the plasma membrane"/>
</dbReference>
<dbReference type="Reactome" id="R-HSA-6791226">
    <property type="pathway name" value="Major pathway of rRNA processing in the nucleolus and cytosol"/>
</dbReference>
<dbReference type="Reactome" id="R-HSA-8854518">
    <property type="pathway name" value="AURKA Activation by TPX2"/>
</dbReference>
<dbReference type="SABIO-RK" id="P48730"/>
<dbReference type="SignaLink" id="P48730"/>
<dbReference type="SIGNOR" id="P48730"/>
<dbReference type="BioGRID-ORCS" id="1453">
    <property type="hits" value="26 hits in 1201 CRISPR screens"/>
</dbReference>
<dbReference type="CD-CODE" id="8C2F96ED">
    <property type="entry name" value="Centrosome"/>
</dbReference>
<dbReference type="CD-CODE" id="91857CE7">
    <property type="entry name" value="Nucleolus"/>
</dbReference>
<dbReference type="CD-CODE" id="FB4E32DD">
    <property type="entry name" value="Presynaptic clusters and postsynaptic densities"/>
</dbReference>
<dbReference type="ChiTaRS" id="CSNK1D">
    <property type="organism name" value="human"/>
</dbReference>
<dbReference type="EvolutionaryTrace" id="P48730"/>
<dbReference type="GeneWiki" id="CSNK1D"/>
<dbReference type="GenomeRNAi" id="1453"/>
<dbReference type="Pharos" id="P48730">
    <property type="development level" value="Tchem"/>
</dbReference>
<dbReference type="PRO" id="PR:P48730"/>
<dbReference type="Proteomes" id="UP000005640">
    <property type="component" value="Chromosome 17"/>
</dbReference>
<dbReference type="RNAct" id="P48730">
    <property type="molecule type" value="protein"/>
</dbReference>
<dbReference type="Bgee" id="ENSG00000141551">
    <property type="expression patterns" value="Expressed in left testis and 205 other cell types or tissues"/>
</dbReference>
<dbReference type="ExpressionAtlas" id="P48730">
    <property type="expression patterns" value="baseline and differential"/>
</dbReference>
<dbReference type="GO" id="GO:0015629">
    <property type="term" value="C:actin cytoskeleton"/>
    <property type="evidence" value="ECO:0000314"/>
    <property type="project" value="HPA"/>
</dbReference>
<dbReference type="GO" id="GO:0005813">
    <property type="term" value="C:centrosome"/>
    <property type="evidence" value="ECO:0000314"/>
    <property type="project" value="UniProtKB"/>
</dbReference>
<dbReference type="GO" id="GO:0036064">
    <property type="term" value="C:ciliary basal body"/>
    <property type="evidence" value="ECO:0000314"/>
    <property type="project" value="GO_Central"/>
</dbReference>
<dbReference type="GO" id="GO:0005929">
    <property type="term" value="C:cilium"/>
    <property type="evidence" value="ECO:0000314"/>
    <property type="project" value="HPA"/>
</dbReference>
<dbReference type="GO" id="GO:0005737">
    <property type="term" value="C:cytoplasm"/>
    <property type="evidence" value="ECO:0000318"/>
    <property type="project" value="GO_Central"/>
</dbReference>
<dbReference type="GO" id="GO:0005829">
    <property type="term" value="C:cytosol"/>
    <property type="evidence" value="ECO:0000314"/>
    <property type="project" value="HPA"/>
</dbReference>
<dbReference type="GO" id="GO:0033116">
    <property type="term" value="C:endoplasmic reticulum-Golgi intermediate compartment membrane"/>
    <property type="evidence" value="ECO:0000304"/>
    <property type="project" value="Reactome"/>
</dbReference>
<dbReference type="GO" id="GO:0005794">
    <property type="term" value="C:Golgi apparatus"/>
    <property type="evidence" value="ECO:0000314"/>
    <property type="project" value="UniProtKB"/>
</dbReference>
<dbReference type="GO" id="GO:0005654">
    <property type="term" value="C:nucleoplasm"/>
    <property type="evidence" value="ECO:0000314"/>
    <property type="project" value="HPA"/>
</dbReference>
<dbReference type="GO" id="GO:0005634">
    <property type="term" value="C:nucleus"/>
    <property type="evidence" value="ECO:0000250"/>
    <property type="project" value="UniProtKB"/>
</dbReference>
<dbReference type="GO" id="GO:0048471">
    <property type="term" value="C:perinuclear region of cytoplasm"/>
    <property type="evidence" value="ECO:0000314"/>
    <property type="project" value="UniProtKB"/>
</dbReference>
<dbReference type="GO" id="GO:0005886">
    <property type="term" value="C:plasma membrane"/>
    <property type="evidence" value="ECO:0000314"/>
    <property type="project" value="HPA"/>
</dbReference>
<dbReference type="GO" id="GO:0005819">
    <property type="term" value="C:spindle"/>
    <property type="evidence" value="ECO:0000314"/>
    <property type="project" value="UniProtKB"/>
</dbReference>
<dbReference type="GO" id="GO:0005876">
    <property type="term" value="C:spindle microtubule"/>
    <property type="evidence" value="ECO:0000314"/>
    <property type="project" value="UniProtKB"/>
</dbReference>
<dbReference type="GO" id="GO:0005524">
    <property type="term" value="F:ATP binding"/>
    <property type="evidence" value="ECO:0007669"/>
    <property type="project" value="UniProtKB-KW"/>
</dbReference>
<dbReference type="GO" id="GO:0045296">
    <property type="term" value="F:cadherin binding"/>
    <property type="evidence" value="ECO:0007005"/>
    <property type="project" value="BHF-UCL"/>
</dbReference>
<dbReference type="GO" id="GO:0004672">
    <property type="term" value="F:protein kinase activity"/>
    <property type="evidence" value="ECO:0000314"/>
    <property type="project" value="UniProtKB"/>
</dbReference>
<dbReference type="GO" id="GO:0106310">
    <property type="term" value="F:protein serine kinase activity"/>
    <property type="evidence" value="ECO:0000314"/>
    <property type="project" value="UniProtKB"/>
</dbReference>
<dbReference type="GO" id="GO:0004674">
    <property type="term" value="F:protein serine/threonine kinase activity"/>
    <property type="evidence" value="ECO:0000314"/>
    <property type="project" value="UniProtKB"/>
</dbReference>
<dbReference type="GO" id="GO:0050321">
    <property type="term" value="F:tau-protein kinase activity"/>
    <property type="evidence" value="ECO:0000314"/>
    <property type="project" value="UniProtKB"/>
</dbReference>
<dbReference type="GO" id="GO:0032922">
    <property type="term" value="P:circadian regulation of gene expression"/>
    <property type="evidence" value="ECO:0000250"/>
    <property type="project" value="UniProtKB"/>
</dbReference>
<dbReference type="GO" id="GO:0048208">
    <property type="term" value="P:COPII vesicle coating"/>
    <property type="evidence" value="ECO:0000304"/>
    <property type="project" value="Reactome"/>
</dbReference>
<dbReference type="GO" id="GO:0006897">
    <property type="term" value="P:endocytosis"/>
    <property type="evidence" value="ECO:0000318"/>
    <property type="project" value="GO_Central"/>
</dbReference>
<dbReference type="GO" id="GO:0007030">
    <property type="term" value="P:Golgi organization"/>
    <property type="evidence" value="ECO:0000315"/>
    <property type="project" value="SYSCILIA_CCNET"/>
</dbReference>
<dbReference type="GO" id="GO:0007020">
    <property type="term" value="P:microtubule nucleation"/>
    <property type="evidence" value="ECO:0000315"/>
    <property type="project" value="SYSCILIA_CCNET"/>
</dbReference>
<dbReference type="GO" id="GO:1904948">
    <property type="term" value="P:midbrain dopaminergic neuron differentiation"/>
    <property type="evidence" value="ECO:0000250"/>
    <property type="project" value="ParkinsonsUK-UCL"/>
</dbReference>
<dbReference type="GO" id="GO:1905515">
    <property type="term" value="P:non-motile cilium assembly"/>
    <property type="evidence" value="ECO:0000315"/>
    <property type="project" value="SYSCILIA_CCNET"/>
</dbReference>
<dbReference type="GO" id="GO:0090263">
    <property type="term" value="P:positive regulation of canonical Wnt signaling pathway"/>
    <property type="evidence" value="ECO:0000315"/>
    <property type="project" value="BHF-UCL"/>
</dbReference>
<dbReference type="GO" id="GO:2000052">
    <property type="term" value="P:positive regulation of non-canonical Wnt signaling pathway"/>
    <property type="evidence" value="ECO:0000250"/>
    <property type="project" value="ParkinsonsUK-UCL"/>
</dbReference>
<dbReference type="GO" id="GO:0032436">
    <property type="term" value="P:positive regulation of proteasomal ubiquitin-dependent protein catabolic process"/>
    <property type="evidence" value="ECO:0000250"/>
    <property type="project" value="UniProtKB"/>
</dbReference>
<dbReference type="GO" id="GO:0071539">
    <property type="term" value="P:protein localization to centrosome"/>
    <property type="evidence" value="ECO:0000315"/>
    <property type="project" value="SYSCILIA_CCNET"/>
</dbReference>
<dbReference type="GO" id="GO:0061512">
    <property type="term" value="P:protein localization to cilium"/>
    <property type="evidence" value="ECO:0000315"/>
    <property type="project" value="SYSCILIA_CCNET"/>
</dbReference>
<dbReference type="GO" id="GO:0034067">
    <property type="term" value="P:protein localization to Golgi apparatus"/>
    <property type="evidence" value="ECO:0000315"/>
    <property type="project" value="SYSCILIA_CCNET"/>
</dbReference>
<dbReference type="GO" id="GO:0006468">
    <property type="term" value="P:protein phosphorylation"/>
    <property type="evidence" value="ECO:0000314"/>
    <property type="project" value="UniProtKB"/>
</dbReference>
<dbReference type="GO" id="GO:0042752">
    <property type="term" value="P:regulation of circadian rhythm"/>
    <property type="evidence" value="ECO:0000250"/>
    <property type="project" value="UniProtKB"/>
</dbReference>
<dbReference type="GO" id="GO:0007165">
    <property type="term" value="P:signal transduction"/>
    <property type="evidence" value="ECO:0000318"/>
    <property type="project" value="GO_Central"/>
</dbReference>
<dbReference type="GO" id="GO:0051225">
    <property type="term" value="P:spindle assembly"/>
    <property type="evidence" value="ECO:0000314"/>
    <property type="project" value="UniProtKB"/>
</dbReference>
<dbReference type="GO" id="GO:0016055">
    <property type="term" value="P:Wnt signaling pathway"/>
    <property type="evidence" value="ECO:0007669"/>
    <property type="project" value="UniProtKB-KW"/>
</dbReference>
<dbReference type="CDD" id="cd14125">
    <property type="entry name" value="STKc_CK1_delta_epsilon"/>
    <property type="match status" value="1"/>
</dbReference>
<dbReference type="FunFam" id="1.10.510.10:FF:000194">
    <property type="entry name" value="Casein kinase I isoform delta"/>
    <property type="match status" value="1"/>
</dbReference>
<dbReference type="FunFam" id="3.30.200.20:FF:000538">
    <property type="entry name" value="Putative Casein kinase I"/>
    <property type="match status" value="1"/>
</dbReference>
<dbReference type="Gene3D" id="1.10.510.10">
    <property type="entry name" value="Transferase(Phosphotransferase) domain 1"/>
    <property type="match status" value="1"/>
</dbReference>
<dbReference type="InterPro" id="IPR050235">
    <property type="entry name" value="CK1_Ser-Thr_kinase"/>
</dbReference>
<dbReference type="InterPro" id="IPR011009">
    <property type="entry name" value="Kinase-like_dom_sf"/>
</dbReference>
<dbReference type="InterPro" id="IPR000719">
    <property type="entry name" value="Prot_kinase_dom"/>
</dbReference>
<dbReference type="InterPro" id="IPR017441">
    <property type="entry name" value="Protein_kinase_ATP_BS"/>
</dbReference>
<dbReference type="InterPro" id="IPR008271">
    <property type="entry name" value="Ser/Thr_kinase_AS"/>
</dbReference>
<dbReference type="PANTHER" id="PTHR11909">
    <property type="entry name" value="CASEIN KINASE-RELATED"/>
    <property type="match status" value="1"/>
</dbReference>
<dbReference type="Pfam" id="PF00069">
    <property type="entry name" value="Pkinase"/>
    <property type="match status" value="1"/>
</dbReference>
<dbReference type="SMART" id="SM00220">
    <property type="entry name" value="S_TKc"/>
    <property type="match status" value="1"/>
</dbReference>
<dbReference type="SUPFAM" id="SSF56112">
    <property type="entry name" value="Protein kinase-like (PK-like)"/>
    <property type="match status" value="1"/>
</dbReference>
<dbReference type="PROSITE" id="PS00107">
    <property type="entry name" value="PROTEIN_KINASE_ATP"/>
    <property type="match status" value="1"/>
</dbReference>
<dbReference type="PROSITE" id="PS50011">
    <property type="entry name" value="PROTEIN_KINASE_DOM"/>
    <property type="match status" value="1"/>
</dbReference>
<dbReference type="PROSITE" id="PS00108">
    <property type="entry name" value="PROTEIN_KINASE_ST"/>
    <property type="match status" value="1"/>
</dbReference>
<evidence type="ECO:0000250" key="1"/>
<evidence type="ECO:0000250" key="2">
    <source>
        <dbReference type="UniProtKB" id="Q06486"/>
    </source>
</evidence>
<evidence type="ECO:0000250" key="3">
    <source>
        <dbReference type="UniProtKB" id="Q9DC28"/>
    </source>
</evidence>
<evidence type="ECO:0000255" key="4">
    <source>
        <dbReference type="PROSITE-ProRule" id="PRU00159"/>
    </source>
</evidence>
<evidence type="ECO:0000255" key="5">
    <source>
        <dbReference type="PROSITE-ProRule" id="PRU10027"/>
    </source>
</evidence>
<evidence type="ECO:0000256" key="6">
    <source>
        <dbReference type="SAM" id="MobiDB-lite"/>
    </source>
</evidence>
<evidence type="ECO:0000269" key="7">
    <source>
    </source>
</evidence>
<evidence type="ECO:0000269" key="8">
    <source>
    </source>
</evidence>
<evidence type="ECO:0000269" key="9">
    <source>
    </source>
</evidence>
<evidence type="ECO:0000269" key="10">
    <source>
    </source>
</evidence>
<evidence type="ECO:0000269" key="11">
    <source>
    </source>
</evidence>
<evidence type="ECO:0000269" key="12">
    <source>
    </source>
</evidence>
<evidence type="ECO:0000269" key="13">
    <source>
    </source>
</evidence>
<evidence type="ECO:0000269" key="14">
    <source>
    </source>
</evidence>
<evidence type="ECO:0000269" key="15">
    <source>
    </source>
</evidence>
<evidence type="ECO:0000269" key="16">
    <source>
    </source>
</evidence>
<evidence type="ECO:0000269" key="17">
    <source>
    </source>
</evidence>
<evidence type="ECO:0000269" key="18">
    <source>
    </source>
</evidence>
<evidence type="ECO:0000269" key="19">
    <source>
    </source>
</evidence>
<evidence type="ECO:0000269" key="20">
    <source>
    </source>
</evidence>
<evidence type="ECO:0000269" key="21">
    <source>
    </source>
</evidence>
<evidence type="ECO:0000269" key="22">
    <source>
    </source>
</evidence>
<evidence type="ECO:0000269" key="23">
    <source>
    </source>
</evidence>
<evidence type="ECO:0000269" key="24">
    <source>
    </source>
</evidence>
<evidence type="ECO:0000269" key="25">
    <source>
    </source>
</evidence>
<evidence type="ECO:0000269" key="26">
    <source>
    </source>
</evidence>
<evidence type="ECO:0000269" key="27">
    <source>
    </source>
</evidence>
<evidence type="ECO:0000269" key="28">
    <source>
    </source>
</evidence>
<evidence type="ECO:0000269" key="29">
    <source>
    </source>
</evidence>
<evidence type="ECO:0000269" key="30">
    <source>
    </source>
</evidence>
<evidence type="ECO:0000269" key="31">
    <source>
    </source>
</evidence>
<evidence type="ECO:0000269" key="32">
    <source>
    </source>
</evidence>
<evidence type="ECO:0000269" key="33">
    <source>
    </source>
</evidence>
<evidence type="ECO:0000269" key="34">
    <source>
    </source>
</evidence>
<evidence type="ECO:0000269" key="35">
    <source>
    </source>
</evidence>
<evidence type="ECO:0000269" key="36">
    <source>
    </source>
</evidence>
<evidence type="ECO:0000269" key="37">
    <source>
    </source>
</evidence>
<evidence type="ECO:0000269" key="38">
    <source>
    </source>
</evidence>
<evidence type="ECO:0000269" key="39">
    <source>
    </source>
</evidence>
<evidence type="ECO:0000303" key="40">
    <source>
    </source>
</evidence>
<evidence type="ECO:0000303" key="41">
    <source>
    </source>
</evidence>
<evidence type="ECO:0000305" key="42"/>
<evidence type="ECO:0000305" key="43">
    <source>
    </source>
</evidence>
<evidence type="ECO:0000305" key="44">
    <source>
    </source>
</evidence>
<evidence type="ECO:0000305" key="45">
    <source>
    </source>
</evidence>
<evidence type="ECO:0007744" key="46">
    <source>
    </source>
</evidence>
<evidence type="ECO:0007744" key="47">
    <source>
    </source>
</evidence>
<evidence type="ECO:0007744" key="48">
    <source>
    </source>
</evidence>
<evidence type="ECO:0007744" key="49">
    <source>
    </source>
</evidence>
<evidence type="ECO:0007829" key="50">
    <source>
        <dbReference type="PDB" id="6F1W"/>
    </source>
</evidence>
<evidence type="ECO:0007829" key="51">
    <source>
        <dbReference type="PDB" id="6RCG"/>
    </source>
</evidence>
<evidence type="ECO:0007829" key="52">
    <source>
        <dbReference type="PDB" id="6RCH"/>
    </source>
</evidence>
<evidence type="ECO:0007829" key="53">
    <source>
        <dbReference type="PDB" id="8D7O"/>
    </source>
</evidence>
<comment type="function">
    <text evidence="3 7 12 14 17 21 22 23 25 26 27 28 29 30 31 33 36">Essential serine/threonine-protein kinase that regulates diverse cellular growth and survival processes including Wnt signaling, DNA repair and circadian rhythms. It can phosphorylate a large number of proteins. Casein kinases are operationally defined by their preferential utilization of acidic proteins such as caseins as substrates. Phosphorylates connexin-43/GJA1, MAP1A, SNAPIN, MAPT/TAU, TOP2A, DCK, HIF1A, EIF6, p53/TP53, DVL2, DVL3, ESR1, AIB1/NCOA3, DNMT1, PKD2, YAP1, PER1 and PER2. Central component of the circadian clock. In balance with PP1, determines the circadian period length through the regulation of the speed and rhythmicity of PER1 and PER2 phosphorylation. Controls PER1 and PER2 nuclear transport and degradation. YAP1 phosphorylation promotes its SCF(beta-TRCP) E3 ubiquitin ligase-mediated ubiquitination and subsequent degradation. DNMT1 phosphorylation reduces its DNA-binding activity. Phosphorylation of ESR1 and AIB1/NCOA3 stimulates their activity and coactivation. Phosphorylation of DVL2 and DVL3 regulates WNT3A signaling pathway that controls neurite outgrowth. Phosphorylates NEDD9/HEF1 (By similarity). EIF6 phosphorylation promotes its nuclear export. Triggers down-regulation of dopamine receptors in the forebrain. Activates DCK in vitro by phosphorylation. TOP2A phosphorylation favors DNA cleavable complex formation. May regulate the formation of the mitotic spindle apparatus in extravillous trophoblast. Modulates connexin-43/GJA1 gap junction assembly by phosphorylation. Probably involved in lymphocyte physiology. Regulates fast synaptic transmission mediated by glutamate.</text>
</comment>
<comment type="catalytic activity">
    <reaction evidence="12 14 18 21 22 23 24 25 26 28 30 31 33 36">
        <text>L-seryl-[protein] + ATP = O-phospho-L-seryl-[protein] + ADP + H(+)</text>
        <dbReference type="Rhea" id="RHEA:17989"/>
        <dbReference type="Rhea" id="RHEA-COMP:9863"/>
        <dbReference type="Rhea" id="RHEA-COMP:11604"/>
        <dbReference type="ChEBI" id="CHEBI:15378"/>
        <dbReference type="ChEBI" id="CHEBI:29999"/>
        <dbReference type="ChEBI" id="CHEBI:30616"/>
        <dbReference type="ChEBI" id="CHEBI:83421"/>
        <dbReference type="ChEBI" id="CHEBI:456216"/>
        <dbReference type="EC" id="2.7.11.1"/>
    </reaction>
    <physiologicalReaction direction="left-to-right" evidence="45">
        <dbReference type="Rhea" id="RHEA:17990"/>
    </physiologicalReaction>
</comment>
<comment type="catalytic activity">
    <reaction evidence="7 14 21 24 25 28 33 36">
        <text>L-threonyl-[protein] + ATP = O-phospho-L-threonyl-[protein] + ADP + H(+)</text>
        <dbReference type="Rhea" id="RHEA:46608"/>
        <dbReference type="Rhea" id="RHEA-COMP:11060"/>
        <dbReference type="Rhea" id="RHEA-COMP:11605"/>
        <dbReference type="ChEBI" id="CHEBI:15378"/>
        <dbReference type="ChEBI" id="CHEBI:30013"/>
        <dbReference type="ChEBI" id="CHEBI:30616"/>
        <dbReference type="ChEBI" id="CHEBI:61977"/>
        <dbReference type="ChEBI" id="CHEBI:456216"/>
        <dbReference type="EC" id="2.7.11.1"/>
    </reaction>
    <physiologicalReaction direction="left-to-right" evidence="45">
        <dbReference type="Rhea" id="RHEA:46609"/>
    </physiologicalReaction>
</comment>
<comment type="catalytic activity">
    <reaction evidence="14 18 21">
        <text>L-seryl-[tau protein] + ATP = O-phospho-L-seryl-[tau protein] + ADP + H(+)</text>
        <dbReference type="Rhea" id="RHEA:12801"/>
        <dbReference type="Rhea" id="RHEA-COMP:13701"/>
        <dbReference type="Rhea" id="RHEA-COMP:13702"/>
        <dbReference type="ChEBI" id="CHEBI:15378"/>
        <dbReference type="ChEBI" id="CHEBI:29999"/>
        <dbReference type="ChEBI" id="CHEBI:30616"/>
        <dbReference type="ChEBI" id="CHEBI:83421"/>
        <dbReference type="ChEBI" id="CHEBI:456216"/>
        <dbReference type="EC" id="2.7.11.26"/>
    </reaction>
    <physiologicalReaction direction="left-to-right" evidence="43">
        <dbReference type="Rhea" id="RHEA:12802"/>
    </physiologicalReaction>
</comment>
<comment type="catalytic activity">
    <reaction evidence="14 18 21">
        <text>L-threonyl-[tau protein] + ATP = O-phospho-L-threonyl-[tau protein] + ADP + H(+)</text>
        <dbReference type="Rhea" id="RHEA:53904"/>
        <dbReference type="Rhea" id="RHEA-COMP:13703"/>
        <dbReference type="Rhea" id="RHEA-COMP:13704"/>
        <dbReference type="ChEBI" id="CHEBI:15378"/>
        <dbReference type="ChEBI" id="CHEBI:30013"/>
        <dbReference type="ChEBI" id="CHEBI:30616"/>
        <dbReference type="ChEBI" id="CHEBI:61977"/>
        <dbReference type="ChEBI" id="CHEBI:456216"/>
        <dbReference type="EC" id="2.7.11.26"/>
    </reaction>
    <physiologicalReaction direction="left-to-right" evidence="43">
        <dbReference type="Rhea" id="RHEA:53905"/>
    </physiologicalReaction>
</comment>
<comment type="activity regulation">
    <text evidence="14 17 23 24 27 29 31 32 33 39">Exhibits substrate-dependent heparin activation. Drug-mediated inhibition leads to a delay of the oscillations with the magnitude of this effect dependent upon the timing of drug administration. Inhibited by phosphorylation. Repressed by 3-[(2,4,6-trimethoxyphenyl)methylidenyl]-indolin-2-one (IC261), N-(2-aminoethyl)-5-chloroisoquinoline-8-sulfonamide (CKI-7), 4-[4-(2,3-dihydro-benzo[1,4]dioxin-6-yl)-5-pyridin-2-yl-1H-imidazol-2-yl]benzamide (D4476), 3,4-diaryl-isoxazoles and -imidazoles, and 4-(3-cyclohexyl-5-(4-fluoro-phenyl)-3H-imidazol-4-yl) pyrimidin-2-ylamine (PF670462, PF670).</text>
</comment>
<comment type="biophysicochemical properties">
    <kinetics>
        <KM evidence="36">36.5 uM for alpha-casein</KM>
        <KM evidence="36">635.8 uM for PER2 peptide</KM>
        <KM evidence="36">180.6 uM for ATP</KM>
        <text>Maximal velocity nearly identical for the reactions with alpha-casein and PER2 peptide.</text>
    </kinetics>
</comment>
<comment type="subunit">
    <text evidence="2 3 8 10 11 12 14 18 34 35 37 38">Monomer (PubMed:22168824, PubMed:23106386). Component of the circadian core oscillator, which includes the CRY proteins, CLOCK, or NPAS2, ARTNL/BMAL1 or ARTNL2/BMAL2, CSNK1D and/or CSNK1E, TIMELESS and the PER proteins (By similarity). Interacts with DNMT1 and MAP1A (By similarity). Interacts directly with PER1 and PER2 which may lead to their degradation (PubMed:11165242). Interacts with MAPT/TAU (PubMed:14761950). Interacts with SNAPIN (By similarity). Interacts with DBNDD2 (PubMed:16618118). Interacts with AKAP9/AKAP450; this interaction promotes centrosomal subcellular location (PubMed:12270714). Binds to tubulins in mitotic cells upon DNA damage (PubMed:10826492). Interacts with GJA1 (PubMed:12270943). Interacts with DDX3X; this interaction enhances CSNK1D kinase activity in vitro, but it is unclear whether this interaction is physiologically relevant (PubMed:29222110). Interacts with FAM83A, FAM83B, FAM83E and FAM83H (via DUF1669) (PubMed:29789297).</text>
</comment>
<comment type="interaction">
    <interactant intactId="EBI-751621">
        <id>P48730</id>
    </interactant>
    <interactant intactId="EBI-77613">
        <id>P05067</id>
        <label>APP</label>
    </interactant>
    <organismsDiffer>false</organismsDiffer>
    <experiments>3</experiments>
</comment>
<comment type="interaction">
    <interactant intactId="EBI-751621">
        <id>P48730</id>
    </interactant>
    <interactant intactId="EBI-12105646">
        <id>Q49A88-3</id>
        <label>CCDC14</label>
    </interactant>
    <organismsDiffer>false</organismsDiffer>
    <experiments>3</experiments>
</comment>
<comment type="interaction">
    <interactant intactId="EBI-751621">
        <id>P48730</id>
    </interactant>
    <interactant intactId="EBI-10253641">
        <id>Q6PGQ1</id>
        <label>DRICH1</label>
    </interactant>
    <organismsDiffer>false</organismsDiffer>
    <experiments>3</experiments>
</comment>
<comment type="interaction">
    <interactant intactId="EBI-751621">
        <id>P48730</id>
    </interactant>
    <interactant intactId="EBI-739789">
        <id>Q92997</id>
        <label>DVL3</label>
    </interactant>
    <organismsDiffer>false</organismsDiffer>
    <experiments>4</experiments>
</comment>
<comment type="interaction">
    <interactant intactId="EBI-751621">
        <id>P48730</id>
    </interactant>
    <interactant intactId="EBI-852291">
        <id>O60447</id>
        <label>EVI5</label>
    </interactant>
    <organismsDiffer>false</organismsDiffer>
    <experiments>3</experiments>
</comment>
<comment type="interaction">
    <interactant intactId="EBI-751621">
        <id>P48730</id>
    </interactant>
    <interactant intactId="EBI-1049788">
        <id>Q14C86</id>
        <label>GAPVD1</label>
    </interactant>
    <organismsDiffer>false</organismsDiffer>
    <experiments>4</experiments>
</comment>
<comment type="interaction">
    <interactant intactId="EBI-751621">
        <id>P48730</id>
    </interactant>
    <interactant intactId="EBI-1640423">
        <id>Q9H2S9</id>
        <label>IKZF4</label>
    </interactant>
    <organismsDiffer>false</organismsDiffer>
    <experiments>3</experiments>
</comment>
<comment type="interaction">
    <interactant intactId="EBI-751621">
        <id>P48730</id>
    </interactant>
    <interactant intactId="EBI-741355">
        <id>Q96LR2</id>
        <label>LURAP1</label>
    </interactant>
    <organismsDiffer>false</organismsDiffer>
    <experiments>4</experiments>
</comment>
<comment type="interaction">
    <interactant intactId="EBI-751621">
        <id>P48730</id>
    </interactant>
    <interactant intactId="EBI-741037">
        <id>Q9BRK4</id>
        <label>LZTS2</label>
    </interactant>
    <organismsDiffer>false</organismsDiffer>
    <experiments>3</experiments>
</comment>
<comment type="interaction">
    <interactant intactId="EBI-751621">
        <id>P48730</id>
    </interactant>
    <interactant intactId="EBI-389668">
        <id>Q00987</id>
        <label>MDM2</label>
    </interactant>
    <organismsDiffer>false</organismsDiffer>
    <experiments>6</experiments>
</comment>
<comment type="interaction">
    <interactant intactId="EBI-751621">
        <id>P48730</id>
    </interactant>
    <interactant intactId="EBI-741896">
        <id>Q9P286</id>
        <label>PAK5</label>
    </interactant>
    <organismsDiffer>false</organismsDiffer>
    <experiments>3</experiments>
</comment>
<comment type="interaction">
    <interactant intactId="EBI-751621">
        <id>P48730</id>
    </interactant>
    <interactant intactId="EBI-1054296">
        <id>O15055</id>
        <label>PER2</label>
    </interactant>
    <organismsDiffer>false</organismsDiffer>
    <experiments>6</experiments>
</comment>
<comment type="interaction">
    <interactant intactId="EBI-751621">
        <id>P48730</id>
    </interactant>
    <interactant intactId="EBI-2129889">
        <id>O75382</id>
        <label>TRIM3</label>
    </interactant>
    <organismsDiffer>false</organismsDiffer>
    <experiments>3</experiments>
</comment>
<comment type="interaction">
    <interactant intactId="EBI-751621">
        <id>P48730</id>
    </interactant>
    <interactant intactId="EBI-720828">
        <id>Q9C026</id>
        <label>TRIM9</label>
    </interactant>
    <organismsDiffer>false</organismsDiffer>
    <experiments>3</experiments>
</comment>
<comment type="interaction">
    <interactant intactId="EBI-751621">
        <id>P48730</id>
    </interactant>
    <interactant intactId="EBI-356498">
        <id>P62258</id>
        <label>YWHAE</label>
    </interactant>
    <organismsDiffer>false</organismsDiffer>
    <experiments>2</experiments>
</comment>
<comment type="interaction">
    <interactant intactId="EBI-751621">
        <id>P48730</id>
    </interactant>
    <interactant intactId="EBI-742740">
        <id>Q96BR9</id>
        <label>ZBTB8A</label>
    </interactant>
    <organismsDiffer>false</organismsDiffer>
    <experiments>3</experiments>
</comment>
<comment type="interaction">
    <interactant intactId="EBI-751621">
        <id>P48730</id>
    </interactant>
    <interactant intactId="EBI-6255994">
        <id>Q5T7W0</id>
        <label>ZNF618</label>
    </interactant>
    <organismsDiffer>false</organismsDiffer>
    <experiments>4</experiments>
</comment>
<comment type="interaction">
    <interactant intactId="EBI-751621">
        <id>P48730</id>
    </interactant>
    <interactant intactId="EBI-641940">
        <id>Q60838</id>
        <label>Dvl2</label>
    </interactant>
    <organismsDiffer>true</organismsDiffer>
    <experiments>2</experiments>
</comment>
<comment type="interaction">
    <interactant intactId="EBI-9087876">
        <id>P48730-2</id>
    </interactant>
    <interactant intactId="EBI-77613">
        <id>P05067</id>
        <label>APP</label>
    </interactant>
    <organismsDiffer>false</organismsDiffer>
    <experiments>3</experiments>
</comment>
<comment type="interaction">
    <interactant intactId="EBI-9087876">
        <id>P48730-2</id>
    </interactant>
    <interactant intactId="EBI-743771">
        <id>Q92624</id>
        <label>APPBP2</label>
    </interactant>
    <organismsDiffer>false</organismsDiffer>
    <experiments>3</experiments>
</comment>
<comment type="interaction">
    <interactant intactId="EBI-9087876">
        <id>P48730-2</id>
    </interactant>
    <interactant intactId="EBI-2690445">
        <id>Q96GW7</id>
        <label>BCAN</label>
    </interactant>
    <organismsDiffer>false</organismsDiffer>
    <experiments>3</experiments>
</comment>
<comment type="interaction">
    <interactant intactId="EBI-9087876">
        <id>P48730-2</id>
    </interactant>
    <interactant intactId="EBI-1790341">
        <id>Q8IU99</id>
        <label>CALHM1</label>
    </interactant>
    <organismsDiffer>false</organismsDiffer>
    <experiments>3</experiments>
</comment>
<comment type="interaction">
    <interactant intactId="EBI-9087876">
        <id>P48730-2</id>
    </interactant>
    <interactant intactId="EBI-603614">
        <id>Q03135</id>
        <label>CAV1</label>
    </interactant>
    <organismsDiffer>false</organismsDiffer>
    <experiments>3</experiments>
</comment>
<comment type="interaction">
    <interactant intactId="EBI-9087876">
        <id>P48730-2</id>
    </interactant>
    <interactant intactId="EBI-78219">
        <id>P45973</id>
        <label>CBX5</label>
    </interactant>
    <organismsDiffer>false</organismsDiffer>
    <experiments>3</experiments>
</comment>
<comment type="interaction">
    <interactant intactId="EBI-9087876">
        <id>P48730-2</id>
    </interactant>
    <interactant intactId="EBI-3870390">
        <id>P06850</id>
        <label>CRH</label>
    </interactant>
    <organismsDiffer>false</organismsDiffer>
    <experiments>3</experiments>
</comment>
<comment type="interaction">
    <interactant intactId="EBI-9087876">
        <id>P48730-2</id>
    </interactant>
    <interactant intactId="EBI-750300">
        <id>Q01658</id>
        <label>DR1</label>
    </interactant>
    <organismsDiffer>false</organismsDiffer>
    <experiments>3</experiments>
</comment>
<comment type="interaction">
    <interactant intactId="EBI-9087876">
        <id>P48730-2</id>
    </interactant>
    <interactant intactId="EBI-541644">
        <id>Q9BS26</id>
        <label>ERP44</label>
    </interactant>
    <organismsDiffer>false</organismsDiffer>
    <experiments>3</experiments>
</comment>
<comment type="interaction">
    <interactant intactId="EBI-9087876">
        <id>P48730-2</id>
    </interactant>
    <interactant intactId="EBI-400434">
        <id>P35637</id>
        <label>FUS</label>
    </interactant>
    <organismsDiffer>false</organismsDiffer>
    <experiments>3</experiments>
</comment>
<comment type="interaction">
    <interactant intactId="EBI-9087876">
        <id>P48730-2</id>
    </interactant>
    <interactant intactId="EBI-1103439">
        <id>P17302</id>
        <label>GJA1</label>
    </interactant>
    <organismsDiffer>false</organismsDiffer>
    <experiments>3</experiments>
</comment>
<comment type="interaction">
    <interactant intactId="EBI-9087876">
        <id>P48730-2</id>
    </interactant>
    <interactant intactId="EBI-739467">
        <id>Q9H8Y8</id>
        <label>GORASP2</label>
    </interactant>
    <organismsDiffer>false</organismsDiffer>
    <experiments>3</experiments>
</comment>
<comment type="interaction">
    <interactant intactId="EBI-9087876">
        <id>P48730-2</id>
    </interactant>
    <interactant intactId="EBI-3904795">
        <id>P25098</id>
        <label>GRK2</label>
    </interactant>
    <organismsDiffer>false</organismsDiffer>
    <experiments>3</experiments>
</comment>
<comment type="interaction">
    <interactant intactId="EBI-9087876">
        <id>P48730-2</id>
    </interactant>
    <interactant intactId="EBI-389564">
        <id>Q00403</id>
        <label>GTF2B</label>
    </interactant>
    <organismsDiffer>false</organismsDiffer>
    <experiments>3</experiments>
</comment>
<comment type="interaction">
    <interactant intactId="EBI-9087876">
        <id>P48730-2</id>
    </interactant>
    <interactant intactId="EBI-1054873">
        <id>Q9Y5Q9</id>
        <label>GTF3C3</label>
    </interactant>
    <organismsDiffer>false</organismsDiffer>
    <experiments>3</experiments>
</comment>
<comment type="interaction">
    <interactant intactId="EBI-9087876">
        <id>P48730-2</id>
    </interactant>
    <interactant intactId="EBI-466029">
        <id>P42858</id>
        <label>HTT</label>
    </interactant>
    <organismsDiffer>false</organismsDiffer>
    <experiments>15</experiments>
</comment>
<comment type="interaction">
    <interactant intactId="EBI-9087876">
        <id>P48730-2</id>
    </interactant>
    <interactant intactId="EBI-25832196">
        <id>Q14114-3</id>
        <label>LRP8</label>
    </interactant>
    <organismsDiffer>false</organismsDiffer>
    <experiments>3</experiments>
</comment>
<comment type="interaction">
    <interactant intactId="EBI-9087876">
        <id>P48730-2</id>
    </interactant>
    <interactant intactId="EBI-5323863">
        <id>Q5S007</id>
        <label>LRRK2</label>
    </interactant>
    <organismsDiffer>false</organismsDiffer>
    <experiments>3</experiments>
</comment>
<comment type="interaction">
    <interactant intactId="EBI-9087876">
        <id>P48730-2</id>
    </interactant>
    <interactant intactId="EBI-73946">
        <id>Q16539</id>
        <label>MAPK14</label>
    </interactant>
    <organismsDiffer>false</organismsDiffer>
    <experiments>3</experiments>
</comment>
<comment type="interaction">
    <interactant intactId="EBI-9087876">
        <id>P48730-2</id>
    </interactant>
    <interactant intactId="EBI-302319">
        <id>Q96L34</id>
        <label>MARK4</label>
    </interactant>
    <organismsDiffer>false</organismsDiffer>
    <experiments>3</experiments>
</comment>
<comment type="interaction">
    <interactant intactId="EBI-9087876">
        <id>P48730-2</id>
    </interactant>
    <interactant intactId="EBI-1014514">
        <id>P35240-4</id>
        <label>NF2</label>
    </interactant>
    <organismsDiffer>false</organismsDiffer>
    <experiments>3</experiments>
</comment>
<comment type="interaction">
    <interactant intactId="EBI-9087876">
        <id>P48730-2</id>
    </interactant>
    <interactant intactId="EBI-743225">
        <id>Q6ZW49</id>
        <label>PAXIP1</label>
    </interactant>
    <organismsDiffer>false</organismsDiffer>
    <experiments>3</experiments>
</comment>
<comment type="interaction">
    <interactant intactId="EBI-9087876">
        <id>P48730-2</id>
    </interactant>
    <interactant intactId="EBI-2865290">
        <id>O14494</id>
        <label>PLPP1</label>
    </interactant>
    <organismsDiffer>false</organismsDiffer>
    <experiments>3</experiments>
</comment>
<comment type="interaction">
    <interactant intactId="EBI-9087876">
        <id>P48730-2</id>
    </interactant>
    <interactant intactId="EBI-50433196">
        <id>A0A6Q8PF08</id>
        <label>PMP22</label>
    </interactant>
    <organismsDiffer>false</organismsDiffer>
    <experiments>3</experiments>
</comment>
<comment type="interaction">
    <interactant intactId="EBI-9087876">
        <id>P48730-2</id>
    </interactant>
    <interactant intactId="EBI-476586">
        <id>P17612</id>
        <label>PRKACA</label>
    </interactant>
    <organismsDiffer>false</organismsDiffer>
    <experiments>3</experiments>
</comment>
<comment type="interaction">
    <interactant intactId="EBI-9087876">
        <id>P48730-2</id>
    </interactant>
    <interactant intactId="EBI-716699">
        <id>P07602</id>
        <label>PSAP</label>
    </interactant>
    <organismsDiffer>false</organismsDiffer>
    <experiments>3</experiments>
</comment>
<comment type="interaction">
    <interactant intactId="EBI-9087876">
        <id>P48730-2</id>
    </interactant>
    <interactant intactId="EBI-746453">
        <id>P54725</id>
        <label>RAD23A</label>
    </interactant>
    <organismsDiffer>false</organismsDiffer>
    <experiments>3</experiments>
</comment>
<comment type="interaction">
    <interactant intactId="EBI-9087876">
        <id>P48730-2</id>
    </interactant>
    <interactant intactId="EBI-458391">
        <id>P04271</id>
        <label>S100B</label>
    </interactant>
    <organismsDiffer>false</organismsDiffer>
    <experiments>3</experiments>
</comment>
<comment type="interaction">
    <interactant intactId="EBI-9087876">
        <id>P48730-2</id>
    </interactant>
    <interactant intactId="EBI-78657">
        <id>Q8WTV0</id>
        <label>SCARB1</label>
    </interactant>
    <organismsDiffer>false</organismsDiffer>
    <experiments>3</experiments>
</comment>
<comment type="interaction">
    <interactant intactId="EBI-9087876">
        <id>P48730-2</id>
    </interactant>
    <interactant intactId="EBI-350723">
        <id>P50454</id>
        <label>SERPINH1</label>
    </interactant>
    <organismsDiffer>false</organismsDiffer>
    <experiments>3</experiments>
</comment>
<comment type="interaction">
    <interactant intactId="EBI-9087876">
        <id>P48730-2</id>
    </interactant>
    <interactant intactId="EBI-11522811">
        <id>Q8IUQ4-2</id>
        <label>SIAH1</label>
    </interactant>
    <organismsDiffer>false</organismsDiffer>
    <experiments>3</experiments>
</comment>
<comment type="interaction">
    <interactant intactId="EBI-9087876">
        <id>P48730-2</id>
    </interactant>
    <interactant intactId="EBI-347161">
        <id>P84022</id>
        <label>SMAD3</label>
    </interactant>
    <organismsDiffer>false</organismsDiffer>
    <experiments>3</experiments>
</comment>
<comment type="interaction">
    <interactant intactId="EBI-9087876">
        <id>P48730-2</id>
    </interactant>
    <interactant intactId="EBI-985879">
        <id>P37840</id>
        <label>SNCA</label>
    </interactant>
    <organismsDiffer>false</organismsDiffer>
    <experiments>3</experiments>
</comment>
<comment type="interaction">
    <interactant intactId="EBI-9087876">
        <id>P48730-2</id>
    </interactant>
    <interactant intactId="EBI-990792">
        <id>P00441</id>
        <label>SOD1</label>
    </interactant>
    <organismsDiffer>false</organismsDiffer>
    <experiments>3</experiments>
</comment>
<comment type="interaction">
    <interactant intactId="EBI-9087876">
        <id>P48730-2</id>
    </interactant>
    <interactant intactId="EBI-25912847">
        <id>Q6NUL7</id>
        <label>SPTLC1</label>
    </interactant>
    <organismsDiffer>false</organismsDiffer>
    <experiments>3</experiments>
</comment>
<comment type="interaction">
    <interactant intactId="EBI-9087876">
        <id>P48730-2</id>
    </interactant>
    <interactant intactId="EBI-372899">
        <id>Q13148</id>
        <label>TARDBP</label>
    </interactant>
    <organismsDiffer>false</organismsDiffer>
    <experiments>6</experiments>
</comment>
<comment type="interaction">
    <interactant intactId="EBI-9087876">
        <id>P48730-2</id>
    </interactant>
    <interactant intactId="EBI-296151">
        <id>P37173</id>
        <label>TGFBR2</label>
    </interactant>
    <organismsDiffer>false</organismsDiffer>
    <experiments>3</experiments>
</comment>
<comment type="interaction">
    <interactant intactId="EBI-9087876">
        <id>P48730-2</id>
    </interactant>
    <interactant intactId="EBI-10313040">
        <id>Q9NRS4</id>
        <label>TMPRSS4</label>
    </interactant>
    <organismsDiffer>false</organismsDiffer>
    <experiments>3</experiments>
</comment>
<comment type="interaction">
    <interactant intactId="EBI-9087876">
        <id>P48730-2</id>
    </interactant>
    <interactant intactId="EBI-473284">
        <id>Q9BVJ6</id>
        <label>UTP14A</label>
    </interactant>
    <organismsDiffer>false</organismsDiffer>
    <experiments>3</experiments>
</comment>
<comment type="interaction">
    <interactant intactId="EBI-9087876">
        <id>P48730-2</id>
    </interactant>
    <interactant intactId="EBI-11141397">
        <id>Q9UBQ0-2</id>
        <label>VPS29</label>
    </interactant>
    <organismsDiffer>false</organismsDiffer>
    <experiments>3</experiments>
</comment>
<comment type="interaction">
    <interactant intactId="EBI-9087876">
        <id>P48730-2</id>
    </interactant>
    <interactant intactId="EBI-524753">
        <id>Q8IUH5</id>
        <label>ZDHHC17</label>
    </interactant>
    <organismsDiffer>false</organismsDiffer>
    <experiments>3</experiments>
</comment>
<comment type="subcellular location">
    <subcellularLocation>
        <location>Cytoplasm</location>
    </subcellularLocation>
    <subcellularLocation>
        <location>Nucleus</location>
    </subcellularLocation>
    <subcellularLocation>
        <location evidence="13">Cytoplasm</location>
        <location evidence="13">Cytoskeleton</location>
        <location evidence="13">Microtubule organizing center</location>
        <location evidence="13">Centrosome</location>
    </subcellularLocation>
    <subcellularLocation>
        <location>Cytoplasm</location>
        <location>Perinuclear region</location>
    </subcellularLocation>
    <subcellularLocation>
        <location>Cell membrane</location>
    </subcellularLocation>
    <subcellularLocation>
        <location>Cytoplasm</location>
        <location>Cytoskeleton</location>
        <location>Spindle</location>
    </subcellularLocation>
    <subcellularLocation>
        <location>Golgi apparatus</location>
    </subcellularLocation>
    <text>Localized at mitotic spindle microtubules, and at the centrosomes and interphase in interphase cells. Recruited to the spindle apparatus and the centrosomes in response to DNA-damage. Correct subcellular localization requires kinase activity.</text>
</comment>
<comment type="alternative products">
    <event type="alternative splicing"/>
    <isoform>
        <id>P48730-1</id>
        <name>1</name>
        <sequence type="displayed"/>
    </isoform>
    <isoform>
        <id>P48730-2</id>
        <name>2</name>
        <sequence type="described" ref="VSP_010253"/>
    </isoform>
</comment>
<comment type="tissue specificity">
    <text evidence="15 17">Expressed in all tissues examined, including brain, heart, lung, liver, pancreas, kidney, placenta and skeletal muscle. However, kinase activity is not uniform, with highest kinase activity in splenocytes. In blood, highly expressed in hemopoietic cells and mature granulocytes. Also found in monocytes and lymphocytes.</text>
</comment>
<comment type="developmental stage">
    <text evidence="17">Highly present in extravillous trophoblast cells, which are present at the placenta implantation site and invade the decidua and decidual vessels.</text>
</comment>
<comment type="PTM">
    <text>Autophosphorylated on serine and threonine residues; this autophosphorylation represses activity. Reactivated by phosphatase-mediated dephosphorylation. May be dephosphorylated by PP1.</text>
</comment>
<comment type="disease" evidence="16 36">
    <disease id="DI-03718">
        <name>Advanced sleep phase syndrome, familial, 2</name>
        <acronym>FASPS2</acronym>
        <description>An autosomal dominant disorder characterized by very early sleep onset and offset. Individuals are 'morning larks' with a 4 hours advance of the sleep, temperature and melatonin rhythms.</description>
        <dbReference type="MIM" id="615224"/>
    </disease>
    <text>The disease is caused by variants affecting the gene represented in this entry.</text>
</comment>
<comment type="miscellaneous">
    <text evidence="44">May be involved in Alzheimer disease by phosphorylating MAPT/TAU.</text>
</comment>
<comment type="similarity">
    <text evidence="42">Belongs to the protein kinase superfamily. CK1 Ser/Thr protein kinase family. Casein kinase I subfamily.</text>
</comment>
<comment type="caution">
    <text evidence="45">Was shown to phosphorylate and activate DCK in vitro but probably not in vivo.</text>
</comment>
<reference key="1">
    <citation type="journal article" date="1996" name="Genomics">
        <title>Sequence analysis of the cDNA for the human casein kinase I delta (CSNK1D) gene and its chromosomal localization.</title>
        <authorList>
            <person name="Kusuda J."/>
            <person name="Hidari N."/>
            <person name="Hidari M."/>
            <person name="Hashimoto K."/>
        </authorList>
    </citation>
    <scope>NUCLEOTIDE SEQUENCE [MRNA] (ISOFORM 1)</scope>
    <source>
        <tissue>Brain</tissue>
    </source>
</reference>
<reference key="2">
    <citation type="journal article" date="2004" name="Blood">
        <title>Involvement of casein kinase Iepsilon in cytokine-induced granulocytic differentiation.</title>
        <authorList>
            <person name="Okamura A."/>
            <person name="Iwata N."/>
            <person name="Nagata A."/>
            <person name="Tamekane A."/>
            <person name="Shimoyama M."/>
            <person name="Gomyo H."/>
            <person name="Yakushijin K."/>
            <person name="Urahama N."/>
            <person name="Hamaguchi M."/>
            <person name="Fukui C."/>
            <person name="Chihara K."/>
            <person name="Ito M."/>
            <person name="Matsui T."/>
        </authorList>
    </citation>
    <scope>NUCLEOTIDE SEQUENCE [MRNA] (ISOFORM 1)</scope>
    <scope>TISSUE SPECIFICITY</scope>
    <source>
        <tissue>Hematopoietic stem cell</tissue>
    </source>
</reference>
<reference key="3">
    <citation type="submission" date="2006-09" db="EMBL/GenBank/DDBJ databases">
        <authorList>
            <consortium name="NHLBI resequencing and genotyping service (RS&amp;G)"/>
        </authorList>
    </citation>
    <scope>NUCLEOTIDE SEQUENCE [GENOMIC DNA]</scope>
</reference>
<reference key="4">
    <citation type="journal article" date="2004" name="Nat. Genet.">
        <title>Complete sequencing and characterization of 21,243 full-length human cDNAs.</title>
        <authorList>
            <person name="Ota T."/>
            <person name="Suzuki Y."/>
            <person name="Nishikawa T."/>
            <person name="Otsuki T."/>
            <person name="Sugiyama T."/>
            <person name="Irie R."/>
            <person name="Wakamatsu A."/>
            <person name="Hayashi K."/>
            <person name="Sato H."/>
            <person name="Nagai K."/>
            <person name="Kimura K."/>
            <person name="Makita H."/>
            <person name="Sekine M."/>
            <person name="Obayashi M."/>
            <person name="Nishi T."/>
            <person name="Shibahara T."/>
            <person name="Tanaka T."/>
            <person name="Ishii S."/>
            <person name="Yamamoto J."/>
            <person name="Saito K."/>
            <person name="Kawai Y."/>
            <person name="Isono Y."/>
            <person name="Nakamura Y."/>
            <person name="Nagahari K."/>
            <person name="Murakami K."/>
            <person name="Yasuda T."/>
            <person name="Iwayanagi T."/>
            <person name="Wagatsuma M."/>
            <person name="Shiratori A."/>
            <person name="Sudo H."/>
            <person name="Hosoiri T."/>
            <person name="Kaku Y."/>
            <person name="Kodaira H."/>
            <person name="Kondo H."/>
            <person name="Sugawara M."/>
            <person name="Takahashi M."/>
            <person name="Kanda K."/>
            <person name="Yokoi T."/>
            <person name="Furuya T."/>
            <person name="Kikkawa E."/>
            <person name="Omura Y."/>
            <person name="Abe K."/>
            <person name="Kamihara K."/>
            <person name="Katsuta N."/>
            <person name="Sato K."/>
            <person name="Tanikawa M."/>
            <person name="Yamazaki M."/>
            <person name="Ninomiya K."/>
            <person name="Ishibashi T."/>
            <person name="Yamashita H."/>
            <person name="Murakawa K."/>
            <person name="Fujimori K."/>
            <person name="Tanai H."/>
            <person name="Kimata M."/>
            <person name="Watanabe M."/>
            <person name="Hiraoka S."/>
            <person name="Chiba Y."/>
            <person name="Ishida S."/>
            <person name="Ono Y."/>
            <person name="Takiguchi S."/>
            <person name="Watanabe S."/>
            <person name="Yosida M."/>
            <person name="Hotuta T."/>
            <person name="Kusano J."/>
            <person name="Kanehori K."/>
            <person name="Takahashi-Fujii A."/>
            <person name="Hara H."/>
            <person name="Tanase T.-O."/>
            <person name="Nomura Y."/>
            <person name="Togiya S."/>
            <person name="Komai F."/>
            <person name="Hara R."/>
            <person name="Takeuchi K."/>
            <person name="Arita M."/>
            <person name="Imose N."/>
            <person name="Musashino K."/>
            <person name="Yuuki H."/>
            <person name="Oshima A."/>
            <person name="Sasaki N."/>
            <person name="Aotsuka S."/>
            <person name="Yoshikawa Y."/>
            <person name="Matsunawa H."/>
            <person name="Ichihara T."/>
            <person name="Shiohata N."/>
            <person name="Sano S."/>
            <person name="Moriya S."/>
            <person name="Momiyama H."/>
            <person name="Satoh N."/>
            <person name="Takami S."/>
            <person name="Terashima Y."/>
            <person name="Suzuki O."/>
            <person name="Nakagawa S."/>
            <person name="Senoh A."/>
            <person name="Mizoguchi H."/>
            <person name="Goto Y."/>
            <person name="Shimizu F."/>
            <person name="Wakebe H."/>
            <person name="Hishigaki H."/>
            <person name="Watanabe T."/>
            <person name="Sugiyama A."/>
            <person name="Takemoto M."/>
            <person name="Kawakami B."/>
            <person name="Yamazaki M."/>
            <person name="Watanabe K."/>
            <person name="Kumagai A."/>
            <person name="Itakura S."/>
            <person name="Fukuzumi Y."/>
            <person name="Fujimori Y."/>
            <person name="Komiyama M."/>
            <person name="Tashiro H."/>
            <person name="Tanigami A."/>
            <person name="Fujiwara T."/>
            <person name="Ono T."/>
            <person name="Yamada K."/>
            <person name="Fujii Y."/>
            <person name="Ozaki K."/>
            <person name="Hirao M."/>
            <person name="Ohmori Y."/>
            <person name="Kawabata A."/>
            <person name="Hikiji T."/>
            <person name="Kobatake N."/>
            <person name="Inagaki H."/>
            <person name="Ikema Y."/>
            <person name="Okamoto S."/>
            <person name="Okitani R."/>
            <person name="Kawakami T."/>
            <person name="Noguchi S."/>
            <person name="Itoh T."/>
            <person name="Shigeta K."/>
            <person name="Senba T."/>
            <person name="Matsumura K."/>
            <person name="Nakajima Y."/>
            <person name="Mizuno T."/>
            <person name="Morinaga M."/>
            <person name="Sasaki M."/>
            <person name="Togashi T."/>
            <person name="Oyama M."/>
            <person name="Hata H."/>
            <person name="Watanabe M."/>
            <person name="Komatsu T."/>
            <person name="Mizushima-Sugano J."/>
            <person name="Satoh T."/>
            <person name="Shirai Y."/>
            <person name="Takahashi Y."/>
            <person name="Nakagawa K."/>
            <person name="Okumura K."/>
            <person name="Nagase T."/>
            <person name="Nomura N."/>
            <person name="Kikuchi H."/>
            <person name="Masuho Y."/>
            <person name="Yamashita R."/>
            <person name="Nakai K."/>
            <person name="Yada T."/>
            <person name="Nakamura Y."/>
            <person name="Ohara O."/>
            <person name="Isogai T."/>
            <person name="Sugano S."/>
        </authorList>
    </citation>
    <scope>NUCLEOTIDE SEQUENCE [LARGE SCALE MRNA] (ISOFORM 2)</scope>
    <source>
        <tissue>Placenta</tissue>
    </source>
</reference>
<reference key="5">
    <citation type="journal article" date="2004" name="Genome Res.">
        <title>The status, quality, and expansion of the NIH full-length cDNA project: the Mammalian Gene Collection (MGC).</title>
        <authorList>
            <consortium name="The MGC Project Team"/>
        </authorList>
    </citation>
    <scope>NUCLEOTIDE SEQUENCE [LARGE SCALE MRNA] (ISOFORMS 1 AND 2)</scope>
    <source>
        <tissue>Placenta</tissue>
        <tissue>Spleen</tissue>
    </source>
</reference>
<reference key="6">
    <citation type="journal article" date="1998" name="J. Biol. Chem.">
        <title>Regulation of casein kinase I epsilon and casein kinase I delta by an in vivo futile phosphorylation cycle.</title>
        <authorList>
            <person name="Rivers A."/>
            <person name="Gietzen K.F."/>
            <person name="Vielhaber E."/>
            <person name="Virshup D.M."/>
        </authorList>
    </citation>
    <scope>ACTIVITY REGULATION</scope>
    <scope>AUTOPHOSPHORYLATION</scope>
</reference>
<reference key="7">
    <citation type="journal article" date="1999" name="FEBS Lett.">
        <title>Protein kinase CK1 is a p53-threonine 18 kinase which requires prior phosphorylation of serine 15.</title>
        <authorList>
            <person name="Dumaz N."/>
            <person name="Milne D.M."/>
            <person name="Meek D.W."/>
        </authorList>
    </citation>
    <scope>FUNCTION AS TP53 KINASE</scope>
    <scope>CATALYTIC ACTIVITY</scope>
</reference>
<reference key="8">
    <citation type="journal article" date="2000" name="Eur. J. Cell Biol.">
        <title>Interaction of casein kinase 1 delta (CK1delta) with post-Golgi structures, microtubules and the spindle apparatus.</title>
        <authorList>
            <person name="Behrend L."/>
            <person name="Stoeter M."/>
            <person name="Kurth M."/>
            <person name="Rutter G."/>
            <person name="Heukeshoven J."/>
            <person name="Deppert W."/>
            <person name="Knippschild U."/>
        </authorList>
    </citation>
    <scope>INTERACTION WITH TUBULINS</scope>
    <scope>SUBCELLULAR LOCATION</scope>
</reference>
<reference key="9">
    <citation type="journal article" date="2001" name="Exp. Cell Res.">
        <title>Catalytic activity of protein kinase CK1 delta (casein kinase 1delta) is essential for its normal subcellular localization.</title>
        <authorList>
            <person name="Milne D.M."/>
            <person name="Looby P."/>
            <person name="Meek D.W."/>
        </authorList>
    </citation>
    <scope>SUBCELLULAR LOCATION</scope>
    <scope>MUTAGENESIS OF LYS-38 AND THR-176</scope>
</reference>
<reference key="10">
    <citation type="journal article" date="2001" name="FEBS Lett.">
        <title>Human casein kinase Idelta phosphorylation of human circadian clock proteins period 1 and 2.</title>
        <authorList>
            <person name="Camacho F."/>
            <person name="Cilio M."/>
            <person name="Guo Y."/>
            <person name="Virshup D.M."/>
            <person name="Patel K."/>
            <person name="Khorkova O."/>
            <person name="Styren S."/>
            <person name="Morse B."/>
            <person name="Yao Z."/>
            <person name="Keesler G.A."/>
        </authorList>
    </citation>
    <scope>INTERACTION WITH PER1 AND PER2</scope>
</reference>
<reference key="11">
    <citation type="journal article" date="2002" name="J. Biol. Chem.">
        <title>Casein kinase 1 regulates connexin-43 gap junction assembly.</title>
        <authorList>
            <person name="Cooper C.D."/>
            <person name="Lampe P.D."/>
        </authorList>
    </citation>
    <scope>FUNCTION AS CONNEXIN-43/GJA1 KINASE</scope>
    <scope>INTERACTION WITH CONNEXIN-43/GJA1</scope>
    <scope>CATALYTIC ACTIVITY</scope>
</reference>
<reference key="12">
    <citation type="journal article" date="2002" name="J. Mol. Biol.">
        <title>Centrosomal anchoring of the protein kinase CK1delta mediated by attachment to the large, coiled-coil scaffolding protein CG-NAP/AKAP450.</title>
        <authorList>
            <person name="Sillibourne J.E."/>
            <person name="Milne D.M."/>
            <person name="Takahashi M."/>
            <person name="Ono Y."/>
            <person name="Meek D.W."/>
        </authorList>
    </citation>
    <scope>INTERACTION WITH AKAP9/AKAP450</scope>
    <scope>SUBCELLULAR LOCATION</scope>
</reference>
<reference key="13">
    <citation type="journal article" date="2003" name="Nature">
        <title>Proteomic characterization of the human centrosome by protein correlation profiling.</title>
        <authorList>
            <person name="Andersen J.S."/>
            <person name="Wilkinson C.J."/>
            <person name="Mayor T."/>
            <person name="Mortensen P."/>
            <person name="Nigg E.A."/>
            <person name="Mann M."/>
        </authorList>
    </citation>
    <scope>IDENTIFICATION BY MASS SPECTROMETRY</scope>
    <scope>SUBCELLULAR LOCATION [LARGE SCALE ANALYSIS]</scope>
    <source>
        <tissue>Lymphoblast</tissue>
    </source>
</reference>
<reference key="14">
    <citation type="journal article" date="2004" name="J. Biol. Chem.">
        <title>Casein kinase 1 delta phosphorylates tau and disrupts its binding to microtubules.</title>
        <authorList>
            <person name="Li G."/>
            <person name="Yin H."/>
            <person name="Kuret J."/>
        </authorList>
    </citation>
    <scope>FUNCTION AS MAPT/TAU KINASE</scope>
    <scope>ACTIVITY REGULATION</scope>
    <scope>INTERACTION WITH MAPT/TAU</scope>
    <scope>CATALYTIC ACTIVITY</scope>
</reference>
<reference key="15">
    <citation type="journal article" date="2005" name="Oncogene">
        <title>Inhibition of casein kinase I delta alters mitotic spindle formation and induces apoptosis in trophoblast cells.</title>
        <authorList>
            <person name="Stoeter M."/>
            <person name="Bamberger A.-M."/>
            <person name="Aslan B."/>
            <person name="Kurth M."/>
            <person name="Speidel D."/>
            <person name="Loening T."/>
            <person name="Frank H.-G."/>
            <person name="Kaufmann P."/>
            <person name="Loehler J."/>
            <person name="Henne-Bruns D."/>
            <person name="Deppert W."/>
            <person name="Knippschild U."/>
        </authorList>
    </citation>
    <scope>FUNCTION IN MITOTIC SPINDLE FORMATION</scope>
    <scope>SUBCELLULAR LOCATION</scope>
    <scope>TISSUE SPECIFICITY</scope>
    <scope>DEVELOPMENTAL STAGE</scope>
    <scope>ACTIVITY REGULATION</scope>
</reference>
<reference key="16">
    <citation type="journal article" date="2006" name="Biochemistry">
        <title>Dysbindin structural homologue CK1BP is an isoform-selective binding partner of human casein kinase-1.</title>
        <authorList>
            <person name="Yin H."/>
            <person name="Laguna K.A."/>
            <person name="Li G."/>
            <person name="Kuret J."/>
        </authorList>
    </citation>
    <scope>CATALYTIC ACTIVITY</scope>
    <scope>INTERACTION WITH DBNDD2</scope>
</reference>
<reference key="17">
    <citation type="journal article" date="2007" name="EMBO J.">
        <title>Phosphorylation at Ser244 by CK1 determines nuclear localization and substrate targeting of PKD2.</title>
        <authorList>
            <person name="von Blume J."/>
            <person name="Knippschild U."/>
            <person name="Dequiedt F."/>
            <person name="Giamas G."/>
            <person name="Beck A."/>
            <person name="Auer A."/>
            <person name="Van Lint J."/>
            <person name="Adler G."/>
            <person name="Seufferlein T."/>
        </authorList>
    </citation>
    <scope>FUNCTION AS PKD2 KINASE</scope>
    <scope>CATALYTIC ACTIVITY</scope>
</reference>
<reference key="18">
    <citation type="journal article" date="2007" name="J. Biol. Chem.">
        <title>Novel phosphorylation sites in tau from Alzheimer brain support a role for casein kinase 1 in disease pathogenesis.</title>
        <authorList>
            <person name="Hanger D.P."/>
            <person name="Byers H.L."/>
            <person name="Wray S."/>
            <person name="Leung K.-Y."/>
            <person name="Saxton M.J."/>
            <person name="Seereeram A."/>
            <person name="Reynolds C.H."/>
            <person name="Ward M.A."/>
            <person name="Anderton B.H."/>
        </authorList>
    </citation>
    <scope>FUNCTION AS MAPT/TAU KINASE</scope>
    <scope>CATALYTIC ACTIVITY</scope>
</reference>
<reference key="19">
    <citation type="journal article" date="2008" name="J. Proteome Res.">
        <title>Combining protein-based IMAC, peptide-based IMAC, and MudPIT for efficient phosphoproteomic analysis.</title>
        <authorList>
            <person name="Cantin G.T."/>
            <person name="Yi W."/>
            <person name="Lu B."/>
            <person name="Park S.K."/>
            <person name="Xu T."/>
            <person name="Lee J.-D."/>
            <person name="Yates J.R. III"/>
        </authorList>
    </citation>
    <scope>IDENTIFICATION BY MASS SPECTROMETRY [LARGE SCALE ANALYSIS]</scope>
    <source>
        <tissue>Cervix carcinoma</tissue>
    </source>
</reference>
<reference key="20">
    <citation type="journal article" date="2008" name="Mol. Cell">
        <title>Kinase-selective enrichment enables quantitative phosphoproteomics of the kinome across the cell cycle.</title>
        <authorList>
            <person name="Daub H."/>
            <person name="Olsen J.V."/>
            <person name="Bairlein M."/>
            <person name="Gnad F."/>
            <person name="Oppermann F.S."/>
            <person name="Korner R."/>
            <person name="Greff Z."/>
            <person name="Keri G."/>
            <person name="Stemmann O."/>
            <person name="Mann M."/>
        </authorList>
    </citation>
    <scope>IDENTIFICATION BY MASS SPECTROMETRY [LARGE SCALE ANALYSIS]</scope>
    <source>
        <tissue>Cervix carcinoma</tissue>
    </source>
</reference>
<reference key="21">
    <citation type="journal article" date="2008" name="Proc. Natl. Acad. Sci. U.S.A.">
        <title>A quantitative atlas of mitotic phosphorylation.</title>
        <authorList>
            <person name="Dephoure N."/>
            <person name="Zhou C."/>
            <person name="Villen J."/>
            <person name="Beausoleil S.A."/>
            <person name="Bakalarski C.E."/>
            <person name="Elledge S.J."/>
            <person name="Gygi S.P."/>
        </authorList>
    </citation>
    <scope>PHOSPHORYLATION [LARGE SCALE ANALYSIS] AT SER-331 AND SER-384</scope>
    <scope>IDENTIFICATION BY MASS SPECTROMETRY [LARGE SCALE ANALYSIS]</scope>
    <source>
        <tissue>Cervix carcinoma</tissue>
    </source>
</reference>
<reference key="22">
    <citation type="journal article" date="2009" name="J. Med. Chem.">
        <title>3,4-Diaryl-isoxazoles and -imidazoles as potent dual inhibitors of p38alpha mitogen activated protein kinase and casein kinase 1delta.</title>
        <authorList>
            <person name="Peifer C."/>
            <person name="Abadleh M."/>
            <person name="Bischof J."/>
            <person name="Hauser D."/>
            <person name="Schattel V."/>
            <person name="Hirner H."/>
            <person name="Knippschild U."/>
            <person name="Laufer S."/>
        </authorList>
    </citation>
    <scope>ACTIVITY REGULATION</scope>
    <scope>CATALYTIC ACTIVITY</scope>
</reference>
<reference key="23">
    <citation type="journal article" date="2009" name="Mol. Cell. Proteomics">
        <title>Large-scale proteomics analysis of the human kinome.</title>
        <authorList>
            <person name="Oppermann F.S."/>
            <person name="Gnad F."/>
            <person name="Olsen J.V."/>
            <person name="Hornberger R."/>
            <person name="Greff Z."/>
            <person name="Keri G."/>
            <person name="Mann M."/>
            <person name="Daub H."/>
        </authorList>
    </citation>
    <scope>PHOSPHORYLATION [LARGE SCALE ANALYSIS] AT SER-411</scope>
    <scope>IDENTIFICATION BY MASS SPECTROMETRY [LARGE SCALE ANALYSIS]</scope>
</reference>
<reference key="24">
    <citation type="journal article" date="2009" name="Nucleic Acids Res.">
        <title>Casein kinase I delta/epsilon phosphorylates topoisomerase IIalpha at serine-1106 and modulates DNA cleavage activity.</title>
        <authorList>
            <person name="Grozav A.G."/>
            <person name="Chikamori K."/>
            <person name="Kozuki T."/>
            <person name="Grabowski D.R."/>
            <person name="Bukowski R.M."/>
            <person name="Willard B."/>
            <person name="Kinter M."/>
            <person name="Andersen A.H."/>
            <person name="Ganapathi R."/>
            <person name="Ganapathi M.K."/>
        </authorList>
    </citation>
    <scope>FUNCTION AS TOP2A KINASE</scope>
    <scope>ACTIVITY REGULATION</scope>
    <scope>CATALYTIC ACTIVITY</scope>
</reference>
<reference key="25">
    <citation type="journal article" date="2009" name="Nucleic Acids Res.">
        <title>CK1delta modulates the transcriptional activity of ERalpha via AIB1 in an estrogen-dependent manner and regulates ERalpha-AIB1 interactions.</title>
        <authorList>
            <person name="Giamas G."/>
            <person name="Castellano L."/>
            <person name="Feng Q."/>
            <person name="Knippschild U."/>
            <person name="Jacob J."/>
            <person name="Thomas R.S."/>
            <person name="Coombes R.C."/>
            <person name="Smith C.L."/>
            <person name="Jiao L.R."/>
            <person name="Stebbing J."/>
        </authorList>
    </citation>
    <scope>RETRACTED PAPER</scope>
</reference>
<reference key="26">
    <citation type="journal article" date="2009" name="Sci. Signal.">
        <title>Quantitative phosphoproteomic analysis of T cell receptor signaling reveals system-wide modulation of protein-protein interactions.</title>
        <authorList>
            <person name="Mayya V."/>
            <person name="Lundgren D.H."/>
            <person name="Hwang S.-I."/>
            <person name="Rezaul K."/>
            <person name="Wu L."/>
            <person name="Eng J.K."/>
            <person name="Rodionov V."/>
            <person name="Han D.K."/>
        </authorList>
    </citation>
    <scope>PHOSPHORYLATION [LARGE SCALE ANALYSIS] AT SER-383</scope>
    <scope>IDENTIFICATION BY MASS SPECTROMETRY [LARGE SCALE ANALYSIS]</scope>
    <source>
        <tissue>Leukemic T-cell</tissue>
    </source>
</reference>
<reference key="27">
    <citation type="journal article" date="2010" name="Arch. Biochem. Biophys.">
        <title>Casein kinase 1delta activates human recombinant deoxycytidine kinase by Ser-74 phosphorylation, but is not involved in the in vivo regulation of its activity.</title>
        <authorList>
            <person name="Smal C."/>
            <person name="Vertommen D."/>
            <person name="Amsailale R."/>
            <person name="Arts A."/>
            <person name="Degand H."/>
            <person name="Morsomme P."/>
            <person name="Rider M.H."/>
            <person name="Neste E.V."/>
            <person name="Bontemps F."/>
        </authorList>
    </citation>
    <scope>FUNCTION AS DCK KINASE</scope>
    <scope>CATALYTIC ACTIVITY</scope>
</reference>
<reference key="28">
    <citation type="journal article" date="2010" name="Cell. Mol. Life Sci.">
        <title>Isoform specific phosphorylation of p53 by protein kinase CK1.</title>
        <authorList>
            <person name="Venerando A."/>
            <person name="Marin O."/>
            <person name="Cozza G."/>
            <person name="Bustos V.H."/>
            <person name="Sarno S."/>
            <person name="Pinna L.A."/>
        </authorList>
    </citation>
    <scope>FUNCTION AS P53/TP53 KINASE</scope>
    <scope>GENE FAMILY</scope>
    <scope>CATALYTIC ACTIVITY</scope>
</reference>
<reference key="29">
    <citation type="journal article" date="2010" name="Genes Dev.">
        <title>A coordinated phosphorylation by Lats and CK1 regulates YAP stability through SCF(beta-TRCP).</title>
        <authorList>
            <person name="Zhao B."/>
            <person name="Li L."/>
            <person name="Tumaneng K."/>
            <person name="Wang C.-Y."/>
            <person name="Guan K.-L."/>
        </authorList>
    </citation>
    <scope>FUNCTION AS YAP1 KINASE</scope>
    <scope>CATALYTIC ACTIVITY</scope>
</reference>
<reference key="30">
    <citation type="journal article" date="2010" name="J. Cell Sci.">
        <title>Casein kinase 1 regulates human hypoxia-inducible factor HIF-1.</title>
        <authorList>
            <person name="Kalousi A."/>
            <person name="Mylonis I."/>
            <person name="Politou A.S."/>
            <person name="Chachami G."/>
            <person name="Paraskeva E."/>
            <person name="Simos G."/>
        </authorList>
    </citation>
    <scope>FUNCTION AS HIF1A KINASE</scope>
    <scope>CATALYTIC ACTIVITY</scope>
</reference>
<reference key="31">
    <citation type="journal article" date="2010" name="Proc. Natl. Acad. Sci. U.S.A.">
        <title>Entrainment of disrupted circadian behavior through inhibition of casein kinase 1 (CK1) enzymes.</title>
        <authorList>
            <person name="Meng Q.-J."/>
            <person name="Maywood E.S."/>
            <person name="Bechtold D.A."/>
            <person name="Lu W.-Q."/>
            <person name="Li J."/>
            <person name="Gibbs J.E."/>
            <person name="Dupre S.M."/>
            <person name="Chesham J.E."/>
            <person name="Rajamohan F."/>
            <person name="Knafels J."/>
            <person name="Sneed B."/>
            <person name="Zawadzke L.E."/>
            <person name="Ohren J.F."/>
            <person name="Walton K.M."/>
            <person name="Wager T.T."/>
            <person name="Hastings M.H."/>
            <person name="Loudon A.S.I."/>
        </authorList>
    </citation>
    <scope>FUNCTION IN CIRCADIAN RHYTHMS</scope>
    <scope>ACTIVITY REGULATION</scope>
</reference>
<reference key="32">
    <citation type="journal article" date="2010" name="Psychopharmacology">
        <title>Chronic treatment with a selective inhibitor of casein kinase I delta/epsilon yields cumulative phase delays in circadian rhythms.</title>
        <authorList>
            <person name="Sprouse J."/>
            <person name="Reynolds L."/>
            <person name="Kleiman R."/>
            <person name="Tate B."/>
            <person name="Swanson T.A."/>
            <person name="Pickard G.E."/>
        </authorList>
    </citation>
    <scope>FUNCTION IN CIRCADIAN RHYTHMS</scope>
    <scope>ACTIVITY REGULATION</scope>
</reference>
<reference key="33">
    <citation type="journal article" date="2010" name="Sci. Signal.">
        <title>Quantitative phosphoproteomics reveals widespread full phosphorylation site occupancy during mitosis.</title>
        <authorList>
            <person name="Olsen J.V."/>
            <person name="Vermeulen M."/>
            <person name="Santamaria A."/>
            <person name="Kumar C."/>
            <person name="Miller M.L."/>
            <person name="Jensen L.J."/>
            <person name="Gnad F."/>
            <person name="Cox J."/>
            <person name="Jensen T.S."/>
            <person name="Nigg E.A."/>
            <person name="Brunak S."/>
            <person name="Mann M."/>
        </authorList>
    </citation>
    <scope>IDENTIFICATION BY MASS SPECTROMETRY [LARGE SCALE ANALYSIS]</scope>
    <source>
        <tissue>Cervix carcinoma</tissue>
    </source>
</reference>
<reference key="34">
    <citation type="journal article" date="2011" name="BMC Syst. Biol.">
        <title>Initial characterization of the human central proteome.</title>
        <authorList>
            <person name="Burkard T.R."/>
            <person name="Planyavsky M."/>
            <person name="Kaupe I."/>
            <person name="Breitwieser F.P."/>
            <person name="Buerckstuemmer T."/>
            <person name="Bennett K.L."/>
            <person name="Superti-Furga G."/>
            <person name="Colinge J."/>
        </authorList>
    </citation>
    <scope>IDENTIFICATION BY MASS SPECTROMETRY [LARGE SCALE ANALYSIS]</scope>
</reference>
<reference key="35">
    <citation type="journal article" date="2011" name="J. Biol. Chem.">
        <title>Opposing action of casein kinase 1 and calcineurin in nucleo-cytoplasmic shuttling of mammalian translation initiation factor eIF6.</title>
        <authorList>
            <person name="Biswas A."/>
            <person name="Mukherjee S."/>
            <person name="Das S."/>
            <person name="Shields D."/>
            <person name="Chow C.W."/>
            <person name="Maitra U."/>
        </authorList>
    </citation>
    <scope>FUNCTION AS EIF6 KINASE</scope>
    <scope>ACTIVITY REGULATION</scope>
    <scope>CATALYTIC ACTIVITY</scope>
</reference>
<reference key="36">
    <citation type="journal article" date="2011" name="J. Cell Biol.">
        <title>Casein kinase 1 delta functions at the centrosome to mediate Wnt-3a-dependent neurite outgrowth.</title>
        <authorList>
            <person name="Greer Y.E."/>
            <person name="Rubin J.S."/>
        </authorList>
    </citation>
    <scope>FUNCTION AS DVL2 AND DVL3 KINASE</scope>
    <scope>ACTIVITY REGULATION</scope>
    <scope>SUBCELLULAR LOCATION</scope>
    <scope>CATALYTIC ACTIVITY</scope>
</reference>
<reference key="37">
    <citation type="journal article" date="2011" name="Oncogene">
        <title>IC261 induces cell cycle arrest and apoptosis of human cancer cells via CK1delta/epsilon and Wnt/beta-catenin independent inhibition of mitotic spindle formation.</title>
        <authorList>
            <person name="Cheong J.K."/>
            <person name="Nguyen T.H."/>
            <person name="Wang H."/>
            <person name="Tan P."/>
            <person name="Voorhoeve P.M."/>
            <person name="Lee S.H."/>
            <person name="Virshup D.M."/>
        </authorList>
    </citation>
    <scope>ACTIVITY REGULATION</scope>
    <scope>AUTOPHOSPHORYLATION</scope>
</reference>
<reference key="38">
    <citation type="journal article" date="2011" name="Int. J. Biochem. Cell Biol.">
        <title>Casein kinase 1: Complexity in the family.</title>
        <authorList>
            <person name="Cheong J.K."/>
            <person name="Virshup D.M."/>
        </authorList>
    </citation>
    <scope>REVIEW ON CIRCADIAN RHYTHMS</scope>
    <scope>GENE FAMILY</scope>
</reference>
<reference key="39">
    <citation type="journal article" date="2013" name="J. Proteome Res.">
        <title>Toward a comprehensive characterization of a human cancer cell phosphoproteome.</title>
        <authorList>
            <person name="Zhou H."/>
            <person name="Di Palma S."/>
            <person name="Preisinger C."/>
            <person name="Peng M."/>
            <person name="Polat A.N."/>
            <person name="Heck A.J."/>
            <person name="Mohammed S."/>
        </authorList>
    </citation>
    <scope>PHOSPHORYLATION [LARGE SCALE ANALYSIS] AT SER-328; SER-331; SER-382; SER-384 AND SER-407</scope>
    <scope>IDENTIFICATION BY MASS SPECTROMETRY [LARGE SCALE ANALYSIS]</scope>
    <source>
        <tissue>Cervix carcinoma</tissue>
        <tissue>Erythroleukemia</tissue>
    </source>
</reference>
<reference key="40">
    <citation type="journal article" date="2014" name="J. Proteomics">
        <title>An enzyme assisted RP-RPLC approach for in-depth analysis of human liver phosphoproteome.</title>
        <authorList>
            <person name="Bian Y."/>
            <person name="Song C."/>
            <person name="Cheng K."/>
            <person name="Dong M."/>
            <person name="Wang F."/>
            <person name="Huang J."/>
            <person name="Sun D."/>
            <person name="Wang L."/>
            <person name="Ye M."/>
            <person name="Zou H."/>
        </authorList>
    </citation>
    <scope>IDENTIFICATION BY MASS SPECTROMETRY [LARGE SCALE ANALYSIS]</scope>
    <source>
        <tissue>Liver</tissue>
    </source>
</reference>
<reference key="41">
    <citation type="journal article" date="2018" name="J. Cell Sci.">
        <title>A CK1 FRET biosensor reveals that DDX3X is an essential activator of CK1epsilon.</title>
        <authorList>
            <person name="Dolde C."/>
            <person name="Bischof J."/>
            <person name="Grueter S."/>
            <person name="Montada A."/>
            <person name="Halekotte J."/>
            <person name="Peifer C."/>
            <person name="Kalbacher H."/>
            <person name="Baumann U."/>
            <person name="Knippschild U."/>
            <person name="Suter B."/>
        </authorList>
    </citation>
    <scope>INTERACTION WITH DDX3X</scope>
</reference>
<reference key="42">
    <citation type="journal article" date="2018" name="Sci. Signal.">
        <title>The DUF1669 domain of FAM83 family proteins anchor casein kinase 1 isoforms.</title>
        <authorList>
            <person name="Fulcher L.J."/>
            <person name="Bozatzi P."/>
            <person name="Tachie-Menson T."/>
            <person name="Wu K.Z.L."/>
            <person name="Cummins T.D."/>
            <person name="Bufton J.C."/>
            <person name="Pinkas D.M."/>
            <person name="Dunbar K."/>
            <person name="Shrestha S."/>
            <person name="Wood N.T."/>
            <person name="Weidlich S."/>
            <person name="Macartney T.J."/>
            <person name="Varghese J."/>
            <person name="Gourlay R."/>
            <person name="Campbell D.G."/>
            <person name="Dingwell K.S."/>
            <person name="Smith J.C."/>
            <person name="Bullock A.N."/>
            <person name="Sapkota G.P."/>
        </authorList>
    </citation>
    <scope>INTERACTION WITH FAM83A; FAM83B; FAM83E AND FAM83H</scope>
</reference>
<reference key="43">
    <citation type="journal article" date="2021" name="Nucleic Acids Res.">
        <title>Retraction of 'CK1delta modulates the transcriptional activity of ERalpha via AIB1 in an estrogen-dependent manner and regulates ERalpha-AIB1 interactions'.</title>
        <authorList>
            <person name="Giamas G."/>
            <person name="Castellano L."/>
            <person name="Feng Q."/>
            <person name="Knippschild U."/>
            <person name="Jacob J."/>
            <person name="Thomas R.S."/>
            <person name="Coombes R.C."/>
            <person name="Smith C.L."/>
            <person name="Jiao L.R."/>
            <person name="Stebbing J."/>
        </authorList>
    </citation>
    <scope>RETRACTION NOTICE OF PUBMED:19339517</scope>
</reference>
<reference key="44">
    <citation type="journal article" date="1998" name="Acta Crystallogr. D">
        <title>Crystallographic studies of casein kinase I delta toward a structural understanding of auto-inhibition.</title>
        <authorList>
            <person name="Longenecker K.L."/>
            <person name="Roach P.J."/>
            <person name="Hurley T.D."/>
        </authorList>
    </citation>
    <scope>X-RAY CRYSTALLOGRAPHY (2.4 ANGSTROMS)</scope>
</reference>
<reference key="45">
    <citation type="journal article" date="2012" name="J. Med. Chem.">
        <title>Structural basis for the interaction between casein kinase 1 delta and a potent and selective inhibitor.</title>
        <authorList>
            <person name="Long A."/>
            <person name="Zhao H."/>
            <person name="Huang X."/>
        </authorList>
    </citation>
    <scope>X-RAY CRYSTALLOGRAPHY (1.94 ANGSTROMS) OF 1-294 IN COMPLEX WITH INHIBITOR</scope>
    <scope>SUBUNIT</scope>
</reference>
<reference key="46">
    <citation type="journal article" date="2012" name="J. Med. Chem.">
        <title>Structural basis for the potent and selective inhibition of casein kinase 1 epsilon.</title>
        <authorList>
            <person name="Long A.M."/>
            <person name="Zhao H."/>
            <person name="Huang X."/>
        </authorList>
    </citation>
    <scope>X-RAY CRYSTALLOGRAPHY (2.07 ANGSTROMS) OF 1-294 IN COMPLEX WITH INHIBITOR</scope>
    <scope>SUBUNIT</scope>
</reference>
<reference key="47">
    <citation type="journal article" date="2005" name="Nature">
        <title>Functional consequences of a CKIdelta mutation causing familial advanced sleep phase syndrome.</title>
        <authorList>
            <person name="Xu Y."/>
            <person name="Padiath Q.S."/>
            <person name="Shapiro R.E."/>
            <person name="Jones C.R."/>
            <person name="Wu S.C."/>
            <person name="Saigoh N."/>
            <person name="Saigoh K."/>
            <person name="Ptacek L.J."/>
            <person name="Fu Y.H."/>
        </authorList>
    </citation>
    <scope>VARIANT FASPS2 ALA-44</scope>
</reference>
<reference key="48">
    <citation type="journal article" date="2006" name="Science">
        <title>The consensus coding sequences of human breast and colorectal cancers.</title>
        <authorList>
            <person name="Sjoeblom T."/>
            <person name="Jones S."/>
            <person name="Wood L.D."/>
            <person name="Parsons D.W."/>
            <person name="Lin J."/>
            <person name="Barber T.D."/>
            <person name="Mandelker D."/>
            <person name="Leary R.J."/>
            <person name="Ptak J."/>
            <person name="Silliman N."/>
            <person name="Szabo S."/>
            <person name="Buckhaults P."/>
            <person name="Farrell C."/>
            <person name="Meeh P."/>
            <person name="Markowitz S.D."/>
            <person name="Willis J."/>
            <person name="Dawson D."/>
            <person name="Willson J.K.V."/>
            <person name="Gazdar A.F."/>
            <person name="Hartigan J."/>
            <person name="Wu L."/>
            <person name="Liu C."/>
            <person name="Parmigiani G."/>
            <person name="Park B.H."/>
            <person name="Bachman K.E."/>
            <person name="Papadopoulos N."/>
            <person name="Vogelstein B."/>
            <person name="Kinzler K.W."/>
            <person name="Velculescu V.E."/>
        </authorList>
    </citation>
    <scope>VARIANT [LARGE SCALE ANALYSIS] CYS-97</scope>
</reference>
<reference key="49">
    <citation type="journal article" date="2007" name="Nature">
        <title>Patterns of somatic mutation in human cancer genomes.</title>
        <authorList>
            <person name="Greenman C."/>
            <person name="Stephens P."/>
            <person name="Smith R."/>
            <person name="Dalgliesh G.L."/>
            <person name="Hunter C."/>
            <person name="Bignell G."/>
            <person name="Davies H."/>
            <person name="Teague J."/>
            <person name="Butler A."/>
            <person name="Stevens C."/>
            <person name="Edkins S."/>
            <person name="O'Meara S."/>
            <person name="Vastrik I."/>
            <person name="Schmidt E.E."/>
            <person name="Avis T."/>
            <person name="Barthorpe S."/>
            <person name="Bhamra G."/>
            <person name="Buck G."/>
            <person name="Choudhury B."/>
            <person name="Clements J."/>
            <person name="Cole J."/>
            <person name="Dicks E."/>
            <person name="Forbes S."/>
            <person name="Gray K."/>
            <person name="Halliday K."/>
            <person name="Harrison R."/>
            <person name="Hills K."/>
            <person name="Hinton J."/>
            <person name="Jenkinson A."/>
            <person name="Jones D."/>
            <person name="Menzies A."/>
            <person name="Mironenko T."/>
            <person name="Perry J."/>
            <person name="Raine K."/>
            <person name="Richardson D."/>
            <person name="Shepherd R."/>
            <person name="Small A."/>
            <person name="Tofts C."/>
            <person name="Varian J."/>
            <person name="Webb T."/>
            <person name="West S."/>
            <person name="Widaa S."/>
            <person name="Yates A."/>
            <person name="Cahill D.P."/>
            <person name="Louis D.N."/>
            <person name="Goldstraw P."/>
            <person name="Nicholson A.G."/>
            <person name="Brasseur F."/>
            <person name="Looijenga L."/>
            <person name="Weber B.L."/>
            <person name="Chiew Y.-E."/>
            <person name="DeFazio A."/>
            <person name="Greaves M.F."/>
            <person name="Green A.R."/>
            <person name="Campbell P."/>
            <person name="Birney E."/>
            <person name="Easton D.F."/>
            <person name="Chenevix-Trench G."/>
            <person name="Tan M.-H."/>
            <person name="Khoo S.K."/>
            <person name="Teh B.T."/>
            <person name="Yuen S.T."/>
            <person name="Leung S.Y."/>
            <person name="Wooster R."/>
            <person name="Futreal P.A."/>
            <person name="Stratton M.R."/>
        </authorList>
    </citation>
    <scope>VARIANTS [LARGE SCALE ANALYSIS] CYS-97 AND ALA-401</scope>
</reference>
<reference key="50">
    <citation type="journal article" date="2013" name="Sci. Transl. Med.">
        <title>Casein kinase idelta mutations in familial migraine and advanced phase.</title>
        <authorList>
            <person name="Brennan K.C."/>
            <person name="Bates E.A."/>
            <person name="Shapiro R.E."/>
            <person name="Zyuzin J."/>
            <person name="Hallows W.C."/>
            <person name="Huang Y."/>
            <person name="Lee H.Y."/>
            <person name="Jones C.R."/>
            <person name="Fu Y.H."/>
            <person name="Charles A.C."/>
            <person name="Ptacek L.J."/>
        </authorList>
    </citation>
    <scope>VARIANTS FASPS2 ALA-44 AND ARG-46</scope>
    <scope>CHARACTERIZATION OF VARIANTS FASPS2 ALA-44 AND ARG-46</scope>
    <scope>FUNCTION</scope>
    <scope>CATALYTIC ACTIVITY</scope>
    <scope>BIOPHYSICOCHEMICAL PROPERTIES</scope>
</reference>